<proteinExistence type="evidence at protein level"/>
<organism>
    <name type="scientific">Homo sapiens</name>
    <name type="common">Human</name>
    <dbReference type="NCBI Taxonomy" id="9606"/>
    <lineage>
        <taxon>Eukaryota</taxon>
        <taxon>Metazoa</taxon>
        <taxon>Chordata</taxon>
        <taxon>Craniata</taxon>
        <taxon>Vertebrata</taxon>
        <taxon>Euteleostomi</taxon>
        <taxon>Mammalia</taxon>
        <taxon>Eutheria</taxon>
        <taxon>Euarchontoglires</taxon>
        <taxon>Primates</taxon>
        <taxon>Haplorrhini</taxon>
        <taxon>Catarrhini</taxon>
        <taxon>Hominidae</taxon>
        <taxon>Homo</taxon>
    </lineage>
</organism>
<gene>
    <name evidence="31 36" type="primary">KAT7</name>
    <name evidence="28 29" type="synonym">HBO1</name>
    <name evidence="32" type="synonym">HBOa</name>
    <name evidence="33" type="synonym">MYST2</name>
</gene>
<dbReference type="EC" id="2.3.1.48" evidence="6 11 19 21 27"/>
<dbReference type="EMBL" id="AF074606">
    <property type="protein sequence ID" value="AAC99368.1"/>
    <property type="molecule type" value="mRNA"/>
</dbReference>
<dbReference type="EMBL" id="AF140360">
    <property type="protein sequence ID" value="AAD42348.1"/>
    <property type="molecule type" value="mRNA"/>
</dbReference>
<dbReference type="EMBL" id="AF217502">
    <property type="protein sequence ID" value="AAL56649.1"/>
    <property type="molecule type" value="mRNA"/>
</dbReference>
<dbReference type="EMBL" id="AK023890">
    <property type="protein sequence ID" value="BAG51236.1"/>
    <property type="molecule type" value="mRNA"/>
</dbReference>
<dbReference type="EMBL" id="AK293976">
    <property type="protein sequence ID" value="BAG57346.1"/>
    <property type="molecule type" value="mRNA"/>
</dbReference>
<dbReference type="EMBL" id="AK294014">
    <property type="protein sequence ID" value="BAG57375.1"/>
    <property type="molecule type" value="mRNA"/>
</dbReference>
<dbReference type="EMBL" id="AK294052">
    <property type="protein sequence ID" value="BAG57401.1"/>
    <property type="molecule type" value="mRNA"/>
</dbReference>
<dbReference type="EMBL" id="AK294836">
    <property type="protein sequence ID" value="BAG57945.1"/>
    <property type="molecule type" value="mRNA"/>
</dbReference>
<dbReference type="EMBL" id="AC015795">
    <property type="status" value="NOT_ANNOTATED_CDS"/>
    <property type="molecule type" value="Genomic_DNA"/>
</dbReference>
<dbReference type="EMBL" id="AC027801">
    <property type="status" value="NOT_ANNOTATED_CDS"/>
    <property type="molecule type" value="Genomic_DNA"/>
</dbReference>
<dbReference type="EMBL" id="CH471109">
    <property type="protein sequence ID" value="EAW94658.1"/>
    <property type="molecule type" value="Genomic_DNA"/>
</dbReference>
<dbReference type="EMBL" id="CH471109">
    <property type="protein sequence ID" value="EAW94659.1"/>
    <property type="molecule type" value="Genomic_DNA"/>
</dbReference>
<dbReference type="EMBL" id="BC032640">
    <property type="protein sequence ID" value="AAH32640.1"/>
    <property type="molecule type" value="mRNA"/>
</dbReference>
<dbReference type="CCDS" id="CCDS11554.1">
    <molecule id="O95251-1"/>
</dbReference>
<dbReference type="CCDS" id="CCDS56035.1">
    <molecule id="O95251-4"/>
</dbReference>
<dbReference type="CCDS" id="CCDS56036.1">
    <molecule id="O95251-2"/>
</dbReference>
<dbReference type="CCDS" id="CCDS56037.1">
    <molecule id="O95251-5"/>
</dbReference>
<dbReference type="CCDS" id="CCDS56038.1">
    <molecule id="O95251-3"/>
</dbReference>
<dbReference type="RefSeq" id="NP_001186084.1">
    <molecule id="O95251-4"/>
    <property type="nucleotide sequence ID" value="NM_001199155.2"/>
</dbReference>
<dbReference type="RefSeq" id="NP_001186085.1">
    <molecule id="O95251-5"/>
    <property type="nucleotide sequence ID" value="NM_001199156.2"/>
</dbReference>
<dbReference type="RefSeq" id="NP_001186086.1">
    <molecule id="O95251-2"/>
    <property type="nucleotide sequence ID" value="NM_001199157.2"/>
</dbReference>
<dbReference type="RefSeq" id="NP_001186087.1">
    <molecule id="O95251-3"/>
    <property type="nucleotide sequence ID" value="NM_001199158.2"/>
</dbReference>
<dbReference type="RefSeq" id="NP_008998.1">
    <molecule id="O95251-1"/>
    <property type="nucleotide sequence ID" value="NM_007067.5"/>
</dbReference>
<dbReference type="PDB" id="5GK9">
    <property type="method" value="X-ray"/>
    <property type="resolution" value="2.40 A"/>
    <property type="chains" value="A=336-611"/>
</dbReference>
<dbReference type="PDB" id="6MAJ">
    <property type="method" value="X-ray"/>
    <property type="resolution" value="2.14 A"/>
    <property type="chains" value="A=336-609"/>
</dbReference>
<dbReference type="PDB" id="6MAK">
    <property type="method" value="X-ray"/>
    <property type="resolution" value="2.13 A"/>
    <property type="chains" value="A=336-609"/>
</dbReference>
<dbReference type="PDB" id="7D0O">
    <property type="method" value="X-ray"/>
    <property type="resolution" value="2.51 A"/>
    <property type="chains" value="A=336-611"/>
</dbReference>
<dbReference type="PDB" id="7D0P">
    <property type="method" value="X-ray"/>
    <property type="resolution" value="1.80 A"/>
    <property type="chains" value="A=336-611"/>
</dbReference>
<dbReference type="PDB" id="7D0Q">
    <property type="method" value="X-ray"/>
    <property type="resolution" value="2.21 A"/>
    <property type="chains" value="A=336-611"/>
</dbReference>
<dbReference type="PDB" id="7D0R">
    <property type="method" value="X-ray"/>
    <property type="resolution" value="1.95 A"/>
    <property type="chains" value="A=336-611"/>
</dbReference>
<dbReference type="PDB" id="7D0S">
    <property type="method" value="X-ray"/>
    <property type="resolution" value="2.30 A"/>
    <property type="chains" value="A=336-611"/>
</dbReference>
<dbReference type="PDBsum" id="5GK9"/>
<dbReference type="PDBsum" id="6MAJ"/>
<dbReference type="PDBsum" id="6MAK"/>
<dbReference type="PDBsum" id="7D0O"/>
<dbReference type="PDBsum" id="7D0P"/>
<dbReference type="PDBsum" id="7D0Q"/>
<dbReference type="PDBsum" id="7D0R"/>
<dbReference type="PDBsum" id="7D0S"/>
<dbReference type="SMR" id="O95251"/>
<dbReference type="BioGRID" id="116315">
    <property type="interactions" value="156"/>
</dbReference>
<dbReference type="ComplexPortal" id="CPX-718">
    <property type="entry name" value="HBO1-4.1 histone acetyltransferase complex"/>
</dbReference>
<dbReference type="ComplexPortal" id="CPX-719">
    <property type="entry name" value="HBO1-4.2 histone acetyltransferase complex"/>
</dbReference>
<dbReference type="ComplexPortal" id="CPX-720">
    <property type="entry name" value="HBO1-4.3 histone acetyltransferase complex"/>
</dbReference>
<dbReference type="ComplexPortal" id="CPX-721">
    <property type="entry name" value="HBO1-5.1 histone acetyltransferase complex"/>
</dbReference>
<dbReference type="ComplexPortal" id="CPX-722">
    <property type="entry name" value="HBO1-5.2 histone acetyltransferase complex"/>
</dbReference>
<dbReference type="ComplexPortal" id="CPX-723">
    <property type="entry name" value="HBO1-5.3 histone acetyltransferase complex"/>
</dbReference>
<dbReference type="CORUM" id="O95251"/>
<dbReference type="DIP" id="DIP-29697N"/>
<dbReference type="FunCoup" id="O95251">
    <property type="interactions" value="3520"/>
</dbReference>
<dbReference type="IntAct" id="O95251">
    <property type="interactions" value="104"/>
</dbReference>
<dbReference type="MINT" id="O95251"/>
<dbReference type="STRING" id="9606.ENSP00000259021"/>
<dbReference type="BindingDB" id="O95251"/>
<dbReference type="ChEMBL" id="CHEMBL3774299"/>
<dbReference type="GuidetoPHARMACOLOGY" id="2667"/>
<dbReference type="GlyGen" id="O95251">
    <property type="glycosylation" value="3 sites, 1 O-linked glycan (3 sites)"/>
</dbReference>
<dbReference type="iPTMnet" id="O95251"/>
<dbReference type="MetOSite" id="O95251"/>
<dbReference type="PhosphoSitePlus" id="O95251"/>
<dbReference type="SwissPalm" id="O95251"/>
<dbReference type="BioMuta" id="KAT7"/>
<dbReference type="jPOST" id="O95251"/>
<dbReference type="MassIVE" id="O95251"/>
<dbReference type="PaxDb" id="9606-ENSP00000259021"/>
<dbReference type="PeptideAtlas" id="O95251"/>
<dbReference type="ProteomicsDB" id="17693"/>
<dbReference type="ProteomicsDB" id="33968"/>
<dbReference type="ProteomicsDB" id="50746">
    <molecule id="O95251-1"/>
</dbReference>
<dbReference type="ProteomicsDB" id="50747">
    <molecule id="O95251-2"/>
</dbReference>
<dbReference type="ProteomicsDB" id="50748">
    <molecule id="O95251-3"/>
</dbReference>
<dbReference type="Pumba" id="O95251"/>
<dbReference type="Antibodypedia" id="17983">
    <property type="antibodies" value="384 antibodies from 39 providers"/>
</dbReference>
<dbReference type="DNASU" id="11143"/>
<dbReference type="Ensembl" id="ENST00000259021.9">
    <molecule id="O95251-1"/>
    <property type="protein sequence ID" value="ENSP00000259021.4"/>
    <property type="gene ID" value="ENSG00000136504.15"/>
</dbReference>
<dbReference type="Ensembl" id="ENST00000424009.6">
    <molecule id="O95251-4"/>
    <property type="protein sequence ID" value="ENSP00000398961.2"/>
    <property type="gene ID" value="ENSG00000136504.15"/>
</dbReference>
<dbReference type="Ensembl" id="ENST00000454930.6">
    <molecule id="O95251-5"/>
    <property type="protein sequence ID" value="ENSP00000413415.2"/>
    <property type="gene ID" value="ENSG00000136504.15"/>
</dbReference>
<dbReference type="Ensembl" id="ENST00000509773.5">
    <molecule id="O95251-2"/>
    <property type="protein sequence ID" value="ENSP00000424577.1"/>
    <property type="gene ID" value="ENSG00000136504.15"/>
</dbReference>
<dbReference type="Ensembl" id="ENST00000510819.5">
    <molecule id="O95251-3"/>
    <property type="protein sequence ID" value="ENSP00000423385.1"/>
    <property type="gene ID" value="ENSG00000136504.15"/>
</dbReference>
<dbReference type="Ensembl" id="ENST00000706506.1">
    <molecule id="O95251-4"/>
    <property type="protein sequence ID" value="ENSP00000516419.1"/>
    <property type="gene ID" value="ENSG00000136504.15"/>
</dbReference>
<dbReference type="GeneID" id="11143"/>
<dbReference type="KEGG" id="hsa:11143"/>
<dbReference type="MANE-Select" id="ENST00000259021.9">
    <property type="protein sequence ID" value="ENSP00000259021.4"/>
    <property type="RefSeq nucleotide sequence ID" value="NM_007067.5"/>
    <property type="RefSeq protein sequence ID" value="NP_008998.1"/>
</dbReference>
<dbReference type="UCSC" id="uc002ipl.3">
    <molecule id="O95251-1"/>
    <property type="organism name" value="human"/>
</dbReference>
<dbReference type="AGR" id="HGNC:17016"/>
<dbReference type="CTD" id="11143"/>
<dbReference type="DisGeNET" id="11143"/>
<dbReference type="GeneCards" id="KAT7"/>
<dbReference type="HGNC" id="HGNC:17016">
    <property type="gene designation" value="KAT7"/>
</dbReference>
<dbReference type="HPA" id="ENSG00000136504">
    <property type="expression patterns" value="Low tissue specificity"/>
</dbReference>
<dbReference type="MalaCards" id="KAT7"/>
<dbReference type="MIM" id="609880">
    <property type="type" value="gene"/>
</dbReference>
<dbReference type="neXtProt" id="NX_O95251"/>
<dbReference type="OpenTargets" id="ENSG00000136504"/>
<dbReference type="PharmGKB" id="PA134886407"/>
<dbReference type="VEuPathDB" id="HostDB:ENSG00000136504"/>
<dbReference type="eggNOG" id="KOG2747">
    <property type="taxonomic scope" value="Eukaryota"/>
</dbReference>
<dbReference type="GeneTree" id="ENSGT00940000157744"/>
<dbReference type="HOGENOM" id="CLU_011815_6_1_1"/>
<dbReference type="InParanoid" id="O95251"/>
<dbReference type="OMA" id="EIGRYEM"/>
<dbReference type="OrthoDB" id="787137at2759"/>
<dbReference type="PAN-GO" id="O95251">
    <property type="GO annotations" value="5 GO annotations based on evolutionary models"/>
</dbReference>
<dbReference type="PhylomeDB" id="O95251"/>
<dbReference type="TreeFam" id="TF317619"/>
<dbReference type="BRENDA" id="2.3.1.48">
    <property type="organism ID" value="2681"/>
</dbReference>
<dbReference type="PathwayCommons" id="O95251"/>
<dbReference type="Reactome" id="R-HSA-3214847">
    <property type="pathway name" value="HATs acetylate histones"/>
</dbReference>
<dbReference type="SignaLink" id="O95251"/>
<dbReference type="SIGNOR" id="O95251"/>
<dbReference type="BioGRID-ORCS" id="11143">
    <property type="hits" value="168 hits in 1199 CRISPR screens"/>
</dbReference>
<dbReference type="ChiTaRS" id="KAT7">
    <property type="organism name" value="human"/>
</dbReference>
<dbReference type="GeneWiki" id="MYST2"/>
<dbReference type="GenomeRNAi" id="11143"/>
<dbReference type="Pharos" id="O95251">
    <property type="development level" value="Tbio"/>
</dbReference>
<dbReference type="PRO" id="PR:O95251"/>
<dbReference type="Proteomes" id="UP000005640">
    <property type="component" value="Chromosome 17"/>
</dbReference>
<dbReference type="RNAct" id="O95251">
    <property type="molecule type" value="protein"/>
</dbReference>
<dbReference type="Bgee" id="ENSG00000136504">
    <property type="expression patterns" value="Expressed in sural nerve and 200 other cell types or tissues"/>
</dbReference>
<dbReference type="ExpressionAtlas" id="O95251">
    <property type="expression patterns" value="baseline and differential"/>
</dbReference>
<dbReference type="GO" id="GO:0000785">
    <property type="term" value="C:chromatin"/>
    <property type="evidence" value="ECO:0000318"/>
    <property type="project" value="GO_Central"/>
</dbReference>
<dbReference type="GO" id="GO:0005694">
    <property type="term" value="C:chromosome"/>
    <property type="evidence" value="ECO:0000314"/>
    <property type="project" value="UniProtKB"/>
</dbReference>
<dbReference type="GO" id="GO:0000775">
    <property type="term" value="C:chromosome, centromeric region"/>
    <property type="evidence" value="ECO:0007669"/>
    <property type="project" value="UniProtKB-SubCell"/>
</dbReference>
<dbReference type="GO" id="GO:0005829">
    <property type="term" value="C:cytosol"/>
    <property type="evidence" value="ECO:0000314"/>
    <property type="project" value="HPA"/>
</dbReference>
<dbReference type="GO" id="GO:0000123">
    <property type="term" value="C:histone acetyltransferase complex"/>
    <property type="evidence" value="ECO:0000314"/>
    <property type="project" value="UniProtKB"/>
</dbReference>
<dbReference type="GO" id="GO:0036409">
    <property type="term" value="C:histone H3-K14 acetyltransferase complex"/>
    <property type="evidence" value="ECO:0000314"/>
    <property type="project" value="UniProtKB"/>
</dbReference>
<dbReference type="GO" id="GO:0005654">
    <property type="term" value="C:nucleoplasm"/>
    <property type="evidence" value="ECO:0000314"/>
    <property type="project" value="HPA"/>
</dbReference>
<dbReference type="GO" id="GO:0005634">
    <property type="term" value="C:nucleus"/>
    <property type="evidence" value="ECO:0000314"/>
    <property type="project" value="UniProtKB"/>
</dbReference>
<dbReference type="GO" id="GO:0090734">
    <property type="term" value="C:site of DNA damage"/>
    <property type="evidence" value="ECO:0000314"/>
    <property type="project" value="UniProtKB"/>
</dbReference>
<dbReference type="GO" id="GO:0003682">
    <property type="term" value="F:chromatin binding"/>
    <property type="evidence" value="ECO:0000318"/>
    <property type="project" value="GO_Central"/>
</dbReference>
<dbReference type="GO" id="GO:0003688">
    <property type="term" value="F:DNA replication origin binding"/>
    <property type="evidence" value="ECO:0000315"/>
    <property type="project" value="CAFA"/>
</dbReference>
<dbReference type="GO" id="GO:0004402">
    <property type="term" value="F:histone acetyltransferase activity"/>
    <property type="evidence" value="ECO:0000314"/>
    <property type="project" value="UniProtKB"/>
</dbReference>
<dbReference type="GO" id="GO:0010484">
    <property type="term" value="F:histone H3 acetyltransferase activity"/>
    <property type="evidence" value="ECO:0000318"/>
    <property type="project" value="GO_Central"/>
</dbReference>
<dbReference type="GO" id="GO:0036408">
    <property type="term" value="F:histone H3K14 acetyltransferase activity"/>
    <property type="evidence" value="ECO:0000314"/>
    <property type="project" value="UniProtKB"/>
</dbReference>
<dbReference type="GO" id="GO:0043994">
    <property type="term" value="F:histone H3K23 acetyltransferase activity"/>
    <property type="evidence" value="ECO:0000314"/>
    <property type="project" value="UniProtKB"/>
</dbReference>
<dbReference type="GO" id="GO:0044016">
    <property type="term" value="F:histone H3K4 acetyltransferase activity"/>
    <property type="evidence" value="ECO:0000315"/>
    <property type="project" value="GO_Central"/>
</dbReference>
<dbReference type="GO" id="GO:0010485">
    <property type="term" value="F:histone H4 acetyltransferase activity"/>
    <property type="evidence" value="ECO:0000314"/>
    <property type="project" value="UniProtKB"/>
</dbReference>
<dbReference type="GO" id="GO:0043997">
    <property type="term" value="F:histone H4K12 acetyltransferase activity"/>
    <property type="evidence" value="ECO:0000314"/>
    <property type="project" value="UniProtKB"/>
</dbReference>
<dbReference type="GO" id="GO:0043995">
    <property type="term" value="F:histone H4K5 acetyltransferase activity"/>
    <property type="evidence" value="ECO:0000314"/>
    <property type="project" value="UniProtKB"/>
</dbReference>
<dbReference type="GO" id="GO:0043996">
    <property type="term" value="F:histone H4K8 acetyltransferase activity"/>
    <property type="evidence" value="ECO:0000314"/>
    <property type="project" value="UniProtKB"/>
</dbReference>
<dbReference type="GO" id="GO:0003712">
    <property type="term" value="F:transcription coregulator activity"/>
    <property type="evidence" value="ECO:0000318"/>
    <property type="project" value="GO_Central"/>
</dbReference>
<dbReference type="GO" id="GO:0008270">
    <property type="term" value="F:zinc ion binding"/>
    <property type="evidence" value="ECO:0007669"/>
    <property type="project" value="UniProtKB-KW"/>
</dbReference>
<dbReference type="GO" id="GO:0006281">
    <property type="term" value="P:DNA repair"/>
    <property type="evidence" value="ECO:0007669"/>
    <property type="project" value="UniProtKB-KW"/>
</dbReference>
<dbReference type="GO" id="GO:0006260">
    <property type="term" value="P:DNA replication"/>
    <property type="evidence" value="ECO:0007669"/>
    <property type="project" value="UniProtKB-KW"/>
</dbReference>
<dbReference type="GO" id="GO:0140889">
    <property type="term" value="P:DNA replication-dependent chromatin disassembly"/>
    <property type="evidence" value="ECO:0000314"/>
    <property type="project" value="UniProtKB"/>
</dbReference>
<dbReference type="GO" id="GO:0018393">
    <property type="term" value="P:internal peptidyl-lysine acetylation"/>
    <property type="evidence" value="ECO:0000314"/>
    <property type="project" value="UniProtKB"/>
</dbReference>
<dbReference type="GO" id="GO:0001779">
    <property type="term" value="P:natural killer cell differentiation"/>
    <property type="evidence" value="ECO:0000250"/>
    <property type="project" value="UniProtKB"/>
</dbReference>
<dbReference type="GO" id="GO:0045740">
    <property type="term" value="P:positive regulation of DNA replication"/>
    <property type="evidence" value="ECO:0000314"/>
    <property type="project" value="UniProtKB"/>
</dbReference>
<dbReference type="GO" id="GO:0032786">
    <property type="term" value="P:positive regulation of DNA-templated transcription, elongation"/>
    <property type="evidence" value="ECO:0000250"/>
    <property type="project" value="UniProtKB"/>
</dbReference>
<dbReference type="GO" id="GO:0045648">
    <property type="term" value="P:positive regulation of erythrocyte differentiation"/>
    <property type="evidence" value="ECO:0007669"/>
    <property type="project" value="Ensembl"/>
</dbReference>
<dbReference type="GO" id="GO:1902035">
    <property type="term" value="P:positive regulation of hematopoietic stem cell proliferation"/>
    <property type="evidence" value="ECO:0000314"/>
    <property type="project" value="UniProtKB"/>
</dbReference>
<dbReference type="GO" id="GO:1900182">
    <property type="term" value="P:positive regulation of protein localization to nucleus"/>
    <property type="evidence" value="ECO:0000314"/>
    <property type="project" value="GO_Central"/>
</dbReference>
<dbReference type="GO" id="GO:0045944">
    <property type="term" value="P:positive regulation of transcription by RNA polymerase II"/>
    <property type="evidence" value="ECO:0007669"/>
    <property type="project" value="Ensembl"/>
</dbReference>
<dbReference type="GO" id="GO:0051726">
    <property type="term" value="P:regulation of cell cycle"/>
    <property type="evidence" value="ECO:0000314"/>
    <property type="project" value="ComplexPortal"/>
</dbReference>
<dbReference type="GO" id="GO:0001558">
    <property type="term" value="P:regulation of cell growth"/>
    <property type="evidence" value="ECO:0000314"/>
    <property type="project" value="ComplexPortal"/>
</dbReference>
<dbReference type="GO" id="GO:2000278">
    <property type="term" value="P:regulation of DNA biosynthetic process"/>
    <property type="evidence" value="ECO:0000314"/>
    <property type="project" value="ComplexPortal"/>
</dbReference>
<dbReference type="GO" id="GO:0006275">
    <property type="term" value="P:regulation of DNA replication"/>
    <property type="evidence" value="ECO:0000314"/>
    <property type="project" value="ComplexPortal"/>
</dbReference>
<dbReference type="GO" id="GO:0030174">
    <property type="term" value="P:regulation of DNA-templated DNA replication initiation"/>
    <property type="evidence" value="ECO:0000314"/>
    <property type="project" value="UniProtKB"/>
</dbReference>
<dbReference type="GO" id="GO:0006355">
    <property type="term" value="P:regulation of DNA-templated transcription"/>
    <property type="evidence" value="ECO:0000314"/>
    <property type="project" value="ComplexPortal"/>
</dbReference>
<dbReference type="GO" id="GO:2000819">
    <property type="term" value="P:regulation of nucleotide-excision repair"/>
    <property type="evidence" value="ECO:0000314"/>
    <property type="project" value="UniProtKB"/>
</dbReference>
<dbReference type="GO" id="GO:0006357">
    <property type="term" value="P:regulation of transcription by RNA polymerase II"/>
    <property type="evidence" value="ECO:0000318"/>
    <property type="project" value="GO_Central"/>
</dbReference>
<dbReference type="GO" id="GO:0072716">
    <property type="term" value="P:response to actinomycin D"/>
    <property type="evidence" value="ECO:0000315"/>
    <property type="project" value="CAFA"/>
</dbReference>
<dbReference type="GO" id="GO:0072739">
    <property type="term" value="P:response to anisomycin"/>
    <property type="evidence" value="ECO:0000315"/>
    <property type="project" value="CAFA"/>
</dbReference>
<dbReference type="GO" id="GO:0072720">
    <property type="term" value="P:response to dithiothreitol"/>
    <property type="evidence" value="ECO:0000315"/>
    <property type="project" value="CAFA"/>
</dbReference>
<dbReference type="GO" id="GO:0072710">
    <property type="term" value="P:response to hydroxyurea"/>
    <property type="evidence" value="ECO:0000315"/>
    <property type="project" value="CAFA"/>
</dbReference>
<dbReference type="GO" id="GO:0072708">
    <property type="term" value="P:response to sorbitol"/>
    <property type="evidence" value="ECO:0000315"/>
    <property type="project" value="CAFA"/>
</dbReference>
<dbReference type="GO" id="GO:0031098">
    <property type="term" value="P:stress-activated protein kinase signaling cascade"/>
    <property type="evidence" value="ECO:0000314"/>
    <property type="project" value="CAFA"/>
</dbReference>
<dbReference type="GO" id="GO:0030217">
    <property type="term" value="P:T cell differentiation"/>
    <property type="evidence" value="ECO:0007669"/>
    <property type="project" value="Ensembl"/>
</dbReference>
<dbReference type="GO" id="GO:0045815">
    <property type="term" value="P:transcription initiation-coupled chromatin remodeling"/>
    <property type="evidence" value="ECO:0000315"/>
    <property type="project" value="GO_Central"/>
</dbReference>
<dbReference type="FunFam" id="1.10.10.10:FF:000092">
    <property type="entry name" value="Histone acetyltransferase"/>
    <property type="match status" value="1"/>
</dbReference>
<dbReference type="FunFam" id="3.30.60.60:FF:000001">
    <property type="entry name" value="Histone acetyltransferase"/>
    <property type="match status" value="1"/>
</dbReference>
<dbReference type="FunFam" id="3.40.630.30:FF:000001">
    <property type="entry name" value="Histone acetyltransferase"/>
    <property type="match status" value="1"/>
</dbReference>
<dbReference type="FunFam" id="4.10.320.30:FF:000002">
    <property type="entry name" value="Histone acetyltransferase"/>
    <property type="match status" value="1"/>
</dbReference>
<dbReference type="Gene3D" id="3.40.630.30">
    <property type="match status" value="1"/>
</dbReference>
<dbReference type="Gene3D" id="4.10.320.30">
    <property type="match status" value="1"/>
</dbReference>
<dbReference type="Gene3D" id="3.30.60.60">
    <property type="entry name" value="N-acetyl transferase-like"/>
    <property type="match status" value="1"/>
</dbReference>
<dbReference type="Gene3D" id="1.10.10.10">
    <property type="entry name" value="Winged helix-like DNA-binding domain superfamily/Winged helix DNA-binding domain"/>
    <property type="match status" value="1"/>
</dbReference>
<dbReference type="InterPro" id="IPR016181">
    <property type="entry name" value="Acyl_CoA_acyltransferase"/>
</dbReference>
<dbReference type="InterPro" id="IPR002717">
    <property type="entry name" value="HAT_MYST-type"/>
</dbReference>
<dbReference type="InterPro" id="IPR050603">
    <property type="entry name" value="MYST_HAT"/>
</dbReference>
<dbReference type="InterPro" id="IPR036388">
    <property type="entry name" value="WH-like_DNA-bd_sf"/>
</dbReference>
<dbReference type="InterPro" id="IPR040706">
    <property type="entry name" value="Zf-MYST"/>
</dbReference>
<dbReference type="InterPro" id="IPR002515">
    <property type="entry name" value="Znf_C2H2C"/>
</dbReference>
<dbReference type="InterPro" id="IPR036060">
    <property type="entry name" value="Znf_C2H2C_sf"/>
</dbReference>
<dbReference type="PANTHER" id="PTHR10615">
    <property type="entry name" value="HISTONE ACETYLTRANSFERASE"/>
    <property type="match status" value="1"/>
</dbReference>
<dbReference type="PANTHER" id="PTHR10615:SF161">
    <property type="entry name" value="HISTONE ACETYLTRANSFERASE KAT7"/>
    <property type="match status" value="1"/>
</dbReference>
<dbReference type="Pfam" id="PF01853">
    <property type="entry name" value="MOZ_SAS"/>
    <property type="match status" value="1"/>
</dbReference>
<dbReference type="Pfam" id="PF01530">
    <property type="entry name" value="zf-C2HC"/>
    <property type="match status" value="1"/>
</dbReference>
<dbReference type="Pfam" id="PF17772">
    <property type="entry name" value="zf-MYST"/>
    <property type="match status" value="1"/>
</dbReference>
<dbReference type="SUPFAM" id="SSF55729">
    <property type="entry name" value="Acyl-CoA N-acyltransferases (Nat)"/>
    <property type="match status" value="1"/>
</dbReference>
<dbReference type="SUPFAM" id="SSF103637">
    <property type="entry name" value="CCHHC domain"/>
    <property type="match status" value="1"/>
</dbReference>
<dbReference type="PROSITE" id="PS51726">
    <property type="entry name" value="MYST_HAT"/>
    <property type="match status" value="1"/>
</dbReference>
<dbReference type="PROSITE" id="PS51802">
    <property type="entry name" value="ZF_CCHHC"/>
    <property type="match status" value="1"/>
</dbReference>
<feature type="chain" id="PRO_0000051569" description="Histone acetyltransferase KAT7">
    <location>
        <begin position="1"/>
        <end position="611"/>
    </location>
</feature>
<feature type="domain" description="MYST-type HAT" evidence="3">
    <location>
        <begin position="332"/>
        <end position="607"/>
    </location>
</feature>
<feature type="zinc finger region" description="CCHHC-type" evidence="4">
    <location>
        <begin position="176"/>
        <end position="219"/>
    </location>
</feature>
<feature type="zinc finger region" description="C2HC MYST-type" evidence="3">
    <location>
        <begin position="365"/>
        <end position="390"/>
    </location>
</feature>
<feature type="region of interest" description="Disordered" evidence="5">
    <location>
        <begin position="1"/>
        <end position="173"/>
    </location>
</feature>
<feature type="compositionally biased region" description="Low complexity" evidence="5">
    <location>
        <begin position="42"/>
        <end position="57"/>
    </location>
</feature>
<feature type="compositionally biased region" description="Polar residues" evidence="5">
    <location>
        <begin position="96"/>
        <end position="105"/>
    </location>
</feature>
<feature type="compositionally biased region" description="Basic and acidic residues" evidence="5">
    <location>
        <begin position="110"/>
        <end position="125"/>
    </location>
</feature>
<feature type="compositionally biased region" description="Low complexity" evidence="5">
    <location>
        <begin position="134"/>
        <end position="145"/>
    </location>
</feature>
<feature type="compositionally biased region" description="Basic and acidic residues" evidence="5">
    <location>
        <begin position="148"/>
        <end position="168"/>
    </location>
</feature>
<feature type="active site" description="Proton donor/acceptor" evidence="35">
    <location>
        <position position="508"/>
    </location>
</feature>
<feature type="binding site" evidence="23 27 37 38 39">
    <location>
        <position position="368"/>
    </location>
    <ligand>
        <name>Zn(2+)</name>
        <dbReference type="ChEBI" id="CHEBI:29105"/>
    </ligand>
</feature>
<feature type="binding site" evidence="23 27 37 38 39">
    <location>
        <position position="371"/>
    </location>
    <ligand>
        <name>Zn(2+)</name>
        <dbReference type="ChEBI" id="CHEBI:29105"/>
    </ligand>
</feature>
<feature type="binding site" evidence="23 27 37 38 39">
    <location>
        <position position="384"/>
    </location>
    <ligand>
        <name>Zn(2+)</name>
        <dbReference type="ChEBI" id="CHEBI:29105"/>
    </ligand>
</feature>
<feature type="binding site" evidence="23 27 37 38 39">
    <location>
        <position position="388"/>
    </location>
    <ligand>
        <name>Zn(2+)</name>
        <dbReference type="ChEBI" id="CHEBI:29105"/>
    </ligand>
</feature>
<feature type="binding site" evidence="23 27 37 39">
    <location>
        <begin position="475"/>
        <end position="477"/>
    </location>
    <ligand>
        <name>acetyl-CoA</name>
        <dbReference type="ChEBI" id="CHEBI:57288"/>
    </ligand>
</feature>
<feature type="binding site" evidence="23 27 37 39">
    <location>
        <begin position="483"/>
        <end position="488"/>
    </location>
    <ligand>
        <name>acetyl-CoA</name>
        <dbReference type="ChEBI" id="CHEBI:57288"/>
    </ligand>
</feature>
<feature type="binding site" evidence="23 27 37 39">
    <location>
        <position position="512"/>
    </location>
    <ligand>
        <name>acetyl-CoA</name>
        <dbReference type="ChEBI" id="CHEBI:57288"/>
    </ligand>
</feature>
<feature type="binding site" evidence="23 27 37 39">
    <location>
        <position position="521"/>
    </location>
    <ligand>
        <name>acetyl-CoA</name>
        <dbReference type="ChEBI" id="CHEBI:57288"/>
    </ligand>
</feature>
<feature type="modified residue" description="Phosphoserine" evidence="46">
    <location>
        <position position="10"/>
    </location>
</feature>
<feature type="modified residue" description="Phosphoserine; by ATR" evidence="20 24 41 46">
    <location>
        <position position="50"/>
    </location>
</feature>
<feature type="modified residue" description="Phosphoserine; by ATR" evidence="20 24">
    <location>
        <position position="53"/>
    </location>
</feature>
<feature type="modified residue" description="Phosphoserine; by PLK1" evidence="12 41 43 45 46">
    <location>
        <position position="57"/>
    </location>
</feature>
<feature type="modified residue" description="Phosphoserine" evidence="46">
    <location>
        <position position="64"/>
    </location>
</feature>
<feature type="modified residue" description="Phosphothreonine; by CDK1" evidence="12 41 43">
    <location>
        <position position="85"/>
    </location>
</feature>
<feature type="modified residue" description="Phosphothreonine; by CDK1" evidence="12 40 41 43 45">
    <location>
        <position position="88"/>
    </location>
</feature>
<feature type="modified residue" description="Phosphoserine" evidence="41 43 45 46">
    <location>
        <position position="102"/>
    </location>
</feature>
<feature type="modified residue" description="Phosphothreonine" evidence="1">
    <location>
        <position position="104"/>
    </location>
</feature>
<feature type="modified residue" description="Phosphoserine" evidence="46">
    <location>
        <position position="111"/>
    </location>
</feature>
<feature type="modified residue" description="Phosphoserine" evidence="45">
    <location>
        <position position="124"/>
    </location>
</feature>
<feature type="modified residue" description="Phosphothreonine" evidence="1">
    <location>
        <position position="128"/>
    </location>
</feature>
<feature type="modified residue" description="Phosphoserine" evidence="47">
    <location>
        <position position="158"/>
    </location>
</feature>
<feature type="modified residue" description="Phosphoserine" evidence="44 45 46">
    <location>
        <position position="162"/>
    </location>
</feature>
<feature type="modified residue" description="Phosphoserine" evidence="45 46">
    <location>
        <position position="164"/>
    </location>
</feature>
<feature type="modified residue" description="Phosphoserine" evidence="46">
    <location>
        <position position="178"/>
    </location>
</feature>
<feature type="modified residue" description="N6-acetyllysine" evidence="42">
    <location>
        <position position="199"/>
    </location>
</feature>
<feature type="modified residue" description="N6-acetyllysine" evidence="1">
    <location>
        <position position="277"/>
    </location>
</feature>
<feature type="modified residue" description="N6-acetyllysine; by autocatalysis" evidence="2">
    <location>
        <position position="432"/>
    </location>
</feature>
<feature type="modified residue" description="Phosphoserine" evidence="44 46">
    <location>
        <position position="506"/>
    </location>
</feature>
<feature type="cross-link" description="Glycyl lysine isopeptide (Lys-Gly) (interchain with G-Cter in SUMO2)" evidence="48">
    <location>
        <position position="323"/>
    </location>
</feature>
<feature type="cross-link" description="Glycyl lysine isopeptide (Lys-Gly) (interchain with G-Cter in ubiquitin)" evidence="18">
    <location>
        <position position="338"/>
    </location>
</feature>
<feature type="splice variant" id="VSP_042552" description="In isoform 3 and isoform 5." evidence="30">
    <location>
        <begin position="55"/>
        <end position="113"/>
    </location>
</feature>
<feature type="splice variant" id="VSP_042553" description="In isoform 2, isoform 3 and isoform 5." evidence="30">
    <location>
        <begin position="114"/>
        <end position="193"/>
    </location>
</feature>
<feature type="splice variant" id="VSP_042554" description="In isoform 2, isoform 3 and isoform 4." evidence="30">
    <location>
        <begin position="222"/>
        <end position="251"/>
    </location>
</feature>
<feature type="mutagenesis site" description="Impaired phosphorylation by ATR, leading to decreased ubiquitination and increased stability in response to DNA damage." evidence="20">
    <original>SQSS</original>
    <variation>AQSA</variation>
    <location>
        <begin position="50"/>
        <end position="53"/>
    </location>
</feature>
<feature type="mutagenesis site" description="Leads to cell cycle arrest in the G1/S phase." evidence="12">
    <original>S</original>
    <variation>A</variation>
    <location>
        <position position="57"/>
    </location>
</feature>
<feature type="mutagenesis site" description="Decreases ubiquitination." evidence="18">
    <original>K</original>
    <variation>R</variation>
    <location>
        <position position="338"/>
    </location>
</feature>
<feature type="mutagenesis site" description="No interaction with MCM2 and ORC1." evidence="8">
    <original>C</original>
    <variation>A</variation>
    <location>
        <position position="371"/>
    </location>
</feature>
<feature type="mutagenesis site" description="Abolishes histone acetyltransferase activity." evidence="11 15">
    <original>G</original>
    <variation>A</variation>
    <location>
        <position position="485"/>
    </location>
</feature>
<feature type="mutagenesis site" description="Abolished histone acetyltransferase activity." evidence="27">
    <original>E</original>
    <variation>A</variation>
    <location>
        <position position="508"/>
    </location>
</feature>
<feature type="sequence conflict" description="In Ref. 5; BAG57945." evidence="34" ref="5">
    <location>
        <begin position="38"/>
        <end position="44"/>
    </location>
</feature>
<feature type="sequence conflict" description="In Ref. 5; BAG57346." evidence="34" ref="5">
    <original>R</original>
    <variation>Q</variation>
    <location>
        <position position="41"/>
    </location>
</feature>
<feature type="strand" evidence="50">
    <location>
        <begin position="339"/>
        <end position="342"/>
    </location>
</feature>
<feature type="strand" evidence="50">
    <location>
        <begin position="345"/>
        <end position="348"/>
    </location>
</feature>
<feature type="helix" evidence="50">
    <location>
        <begin position="357"/>
        <end position="360"/>
    </location>
</feature>
<feature type="strand" evidence="50">
    <location>
        <begin position="362"/>
        <end position="367"/>
    </location>
</feature>
<feature type="turn" evidence="50">
    <location>
        <begin position="369"/>
        <end position="371"/>
    </location>
</feature>
<feature type="strand" evidence="50">
    <location>
        <begin position="374"/>
        <end position="376"/>
    </location>
</feature>
<feature type="helix" evidence="50">
    <location>
        <begin position="378"/>
        <end position="387"/>
    </location>
</feature>
<feature type="strand" evidence="50">
    <location>
        <begin position="394"/>
        <end position="401"/>
    </location>
</feature>
<feature type="strand" evidence="50">
    <location>
        <begin position="404"/>
        <end position="410"/>
    </location>
</feature>
<feature type="turn" evidence="50">
    <location>
        <begin position="411"/>
        <end position="414"/>
    </location>
</feature>
<feature type="helix" evidence="50">
    <location>
        <begin position="415"/>
        <end position="426"/>
    </location>
</feature>
<feature type="strand" evidence="50">
    <location>
        <begin position="441"/>
        <end position="450"/>
    </location>
</feature>
<feature type="strand" evidence="50">
    <location>
        <begin position="453"/>
        <end position="465"/>
    </location>
</feature>
<feature type="strand" evidence="50">
    <location>
        <begin position="470"/>
        <end position="477"/>
    </location>
</feature>
<feature type="helix" evidence="50">
    <location>
        <begin position="479"/>
        <end position="481"/>
    </location>
</feature>
<feature type="turn" evidence="49">
    <location>
        <begin position="482"/>
        <end position="485"/>
    </location>
</feature>
<feature type="helix" evidence="50">
    <location>
        <begin position="486"/>
        <end position="501"/>
    </location>
</feature>
<feature type="strand" evidence="50">
    <location>
        <begin position="505"/>
        <end position="507"/>
    </location>
</feature>
<feature type="helix" evidence="50">
    <location>
        <begin position="513"/>
        <end position="533"/>
    </location>
</feature>
<feature type="strand" evidence="50">
    <location>
        <begin position="536"/>
        <end position="539"/>
    </location>
</feature>
<feature type="helix" evidence="50">
    <location>
        <begin position="541"/>
        <end position="548"/>
    </location>
</feature>
<feature type="helix" evidence="50">
    <location>
        <begin position="552"/>
        <end position="561"/>
    </location>
</feature>
<feature type="strand" evidence="50">
    <location>
        <begin position="565"/>
        <end position="568"/>
    </location>
</feature>
<feature type="strand" evidence="50">
    <location>
        <begin position="571"/>
        <end position="575"/>
    </location>
</feature>
<feature type="helix" evidence="50">
    <location>
        <begin position="578"/>
        <end position="593"/>
    </location>
</feature>
<feature type="helix" evidence="50">
    <location>
        <begin position="600"/>
        <end position="602"/>
    </location>
</feature>
<sequence>MPRRKRNAGSSSDGTEDSDFSTDLEHTDSSESDGTSRRSARVTRSSARLSQSSQDSSPVRNLQSFGTEEPAYSTRRVTRSQQQPTPVTPKKYPLRQTRSSGSETEQVVDFSDRETKNTADHDESPPRTPTGNAPSSESDIDISSPNVSHDESIAKDMSLKDSGSDLSHRPKRRRFHESYNFNMKCPTPGCNSLGHLTGKHERHFSISGCPLYHNLSADECKVRAQSRDKQIEERMLSHRQDDNNRHATRHQAPTERQLRYKEKVAELRKKRNSGLSKEQKEKYMEHRQTYGNTREPLLENLTSEYDLDLFRRAQARASEDLEKLRLQGQITEGSNMIKTIAFGRYELDTWYHSPYPEEYARLGRLYMCEFCLKYMKSQTILRRHMAKCVWKHPPGDEIYRKGSISVFEVDGKKNKIYCQNLCLLAKLFLDHKTLYYDVEPFLFYVMTEADNTGCHLIGYFSKEKNSFLNYNVSCILTMPQYMRQGYGKMLIDFSYLLSKVEEKVGSPERPLSDLGLISYRSYWKEVLLRYLHNFQGKEISIKEISQETAVNPVDIVSTLQALQMLKYWKGKHLVLKRQDLIDEWIAKEAKRSNSNKTMDPSCLKWTPPKGT</sequence>
<accession>O95251</accession>
<accession>B3KN74</accession>
<accession>B4DF85</accession>
<accession>B4DFB4</accession>
<accession>B4DFE0</accession>
<accession>B4DGY4</accession>
<accession>E7ER15</accession>
<accession>G5E9K7</accession>
<protein>
    <recommendedName>
        <fullName evidence="34">Histone acetyltransferase KAT7</fullName>
        <ecNumber evidence="6 11 19 21 27">2.3.1.48</ecNumber>
    </recommendedName>
    <alternativeName>
        <fullName evidence="28 29">Histone acetyltransferase binding to ORC1</fullName>
    </alternativeName>
    <alternativeName>
        <fullName evidence="31">Lysine acetyltransferase 7</fullName>
    </alternativeName>
    <alternativeName>
        <fullName evidence="33">MOZ, YBF2/SAS3, SAS2 and TIP60 protein 2</fullName>
        <shortName evidence="33">MYST-2</shortName>
    </alternativeName>
</protein>
<comment type="function">
    <text evidence="1 6 8 9 10 13 14 15 16 17 19 21 22 24 26 27">Catalytic subunit of histone acetyltransferase HBO1 complexes, which specifically mediate acetylation of histone H3 at 'Lys-14' (H3K14ac), thereby regulating various processes, such as gene transcription, protein ubiquitination, immune regulation, stem cell pluripotent and self-renewal maintenance and embryonic development (PubMed:16387653, PubMed:21753189, PubMed:24065767, PubMed:26620551, PubMed:31767635, PubMed:31827282). Some complexes also catalyze acetylation of histone H4 at 'Lys-5', 'Lys-8' and 'Lys-12' (H4K5ac, H4K8ac and H4K12ac, respectively), regulating DNA replication initiation, regulating DNA replication initiation (PubMed:10438470, PubMed:19187766, PubMed:20129055, PubMed:24065767). Specificity of the HBO1 complexes is determined by the scaffold subunit: complexes containing BRPF scaffold (BRPF1, BRD1/BRPF2 or BRPF3) direct KAT7/HBO1 specificity towards H3K14ac, while complexes containing JADE (JADE1, JADE2 and JADE3) scaffold direct KAT7/HBO1 specificity towards histone H4 (PubMed:19187766, PubMed:20129055, PubMed:24065767, PubMed:26620551). H3K14ac promotes transcriptional elongation by facilitating the processivity of RNA polymerase II (PubMed:31827282). Acts as a key regulator of hematopoiesis by forming a complex with BRD1/BRPF2, directing KAT7/HBO1 specificity towards H3K14ac and promoting erythroid differentiation (PubMed:21753189). H3K14ac is also required for T-cell development (By similarity). KAT7/HBO1-mediated acetylation facilitates two consecutive steps, licensing and activation, in DNA replication initiation: H3K14ac facilitates the activation of replication origins, and histone H4 acetylation (H4K5ac, H4K8ac and H4K12ac) facilitates chromatin loading of MCM complexes, promoting DNA replication licensing (PubMed:10438470, PubMed:11278932, PubMed:18832067, PubMed:19187766, PubMed:20129055, PubMed:21856198, PubMed:24065767, PubMed:26620551). Acts as a positive regulator of centromeric CENPA assembly: recruited to centromeres and mediates histone acetylation, thereby preventing centromere inactivation mediated by SUV39H1, possibly by increasing histone turnover/exchange (PubMed:27270040). Involved in nucleotide excision repair: phosphorylation by ATR in response to ultraviolet irradiation promotes its localization to DNA damage sites, where it mediates histone acetylation to facilitate recruitment of XPC at the damaged DNA sites (PubMed:28719581). Acts as an inhibitor of NF-kappa-B independently of its histone acetyltransferase activity (PubMed:16997280).</text>
</comment>
<comment type="function">
    <text evidence="27">Plays a central role in the maintenance of leukemia stem cells in acute myeloid leukemia (AML) (PubMed:31827282). Acts by mediating acetylation of histone H3 at 'Lys-14' (H3K14ac), thereby facilitating the processivity of RNA polymerase II to maintain the high expression of key genes, such as HOXA9 and HOXA10 that help to sustain the functional properties of leukemia stem cells (PubMed:31827282).</text>
</comment>
<comment type="catalytic activity">
    <reaction evidence="6 11 19 21 27">
        <text>L-lysyl-[histone] + acetyl-CoA = N(6)-acetyl-L-lysyl-[histone] + CoA + H(+)</text>
        <dbReference type="Rhea" id="RHEA:21992"/>
        <dbReference type="Rhea" id="RHEA-COMP:9845"/>
        <dbReference type="Rhea" id="RHEA-COMP:11338"/>
        <dbReference type="ChEBI" id="CHEBI:15378"/>
        <dbReference type="ChEBI" id="CHEBI:29969"/>
        <dbReference type="ChEBI" id="CHEBI:57287"/>
        <dbReference type="ChEBI" id="CHEBI:57288"/>
        <dbReference type="ChEBI" id="CHEBI:61930"/>
        <dbReference type="EC" id="2.3.1.48"/>
    </reaction>
    <physiologicalReaction direction="left-to-right" evidence="6 11 19 21 27">
        <dbReference type="Rhea" id="RHEA:21993"/>
    </physiologicalReaction>
</comment>
<comment type="activity regulation">
    <text evidence="15 27">Histone acetyltransferase activity is inhibited by GMNN in the context of a complex with CDT1, inhibiting histone H4 acetylation and DNA replication licensing (PubMed:20129055). Selectively inhibited by WM-3835 (N'-(4-fluoro-5-methyl-[1,1'-biphenyl]-3-carbonyl)-3- hydroxybenzenesulfonohydrazide) inhibitor (PubMed:31827282).</text>
</comment>
<comment type="subunit">
    <text evidence="1 6 7 8 9 11 13 14 15 16 19 21 22 25">Component of the HBO1 complex composed of KAT7/HBO1, MEAF6, ING4 or ING5, and one scaffold subunit: complexes containing BRPF scaffold (BRPF1, BRD1/BRPF2 or BRPF3) direct KAT7/HBO1 specificity towards H3K14ac, while complexes containing JADE scaffold (JADE1, JADE2 and JADE3) mediate acetylation of histone H4 (PubMed:16387653, PubMed:19187766, PubMed:20129055, PubMed:21753189, PubMed:24065767, PubMed:26620551, PubMed:29382722). Interacts with MCM2 and ORC1 (PubMed:10438470, PubMed:11278932, PubMed:16387653). Interacts with the androgen receptor (AR); in the presence of dihydrotestosterone (PubMed:10930412). Interacts with CDT1 (PubMed:18832067). Interacts with MAP2K1 and CUL1 (By similarity). Interacts with p53/TP53; leading to inhibit histone acetyltransferase activity (PubMed:17954561). Interacts with MIS18BP1 (PubMed:27270040).</text>
</comment>
<comment type="interaction">
    <interactant intactId="EBI-473199">
        <id>O95251</id>
    </interactant>
    <interactant intactId="EBI-608057">
        <id>P10275</id>
        <label>AR</label>
    </interactant>
    <organismsDiffer>false</organismsDiffer>
    <experiments>5</experiments>
</comment>
<comment type="interaction">
    <interactant intactId="EBI-473199">
        <id>O95251</id>
    </interactant>
    <interactant intactId="EBI-473181">
        <id>Q99728</id>
        <label>BARD1</label>
    </interactant>
    <organismsDiffer>false</organismsDiffer>
    <experiments>2</experiments>
</comment>
<comment type="interaction">
    <interactant intactId="EBI-473199">
        <id>O95251</id>
    </interactant>
    <interactant intactId="EBI-473176">
        <id>Q9P2H0</id>
        <label>CEP126</label>
    </interactant>
    <organismsDiffer>false</organismsDiffer>
    <experiments>2</experiments>
</comment>
<comment type="interaction">
    <interactant intactId="EBI-473199">
        <id>O95251</id>
    </interactant>
    <interactant intactId="EBI-954672">
        <id>Q6IE81</id>
        <label>JADE1</label>
    </interactant>
    <organismsDiffer>false</organismsDiffer>
    <experiments>4</experiments>
</comment>
<comment type="interaction">
    <interactant intactId="EBI-473199">
        <id>O95251</id>
    </interactant>
    <interactant intactId="EBI-348259">
        <id>Q96EZ8</id>
        <label>MCRS1</label>
    </interactant>
    <organismsDiffer>false</organismsDiffer>
    <experiments>3</experiments>
</comment>
<comment type="interaction">
    <interactant intactId="EBI-473199">
        <id>O95251</id>
    </interactant>
    <interactant intactId="EBI-476768">
        <id>P53350</id>
        <label>PLK1</label>
    </interactant>
    <organismsDiffer>false</organismsDiffer>
    <experiments>6</experiments>
</comment>
<comment type="interaction">
    <interactant intactId="EBI-473199">
        <id>O95251</id>
    </interactant>
    <interactant intactId="EBI-353844">
        <id>P08670</id>
        <label>VIM</label>
    </interactant>
    <organismsDiffer>false</organismsDiffer>
    <experiments>4</experiments>
</comment>
<comment type="subcellular location">
    <subcellularLocation>
        <location evidence="7 8 9 19 24">Nucleus</location>
    </subcellularLocation>
    <subcellularLocation>
        <location evidence="13 14 15 16 19 24">Chromosome</location>
    </subcellularLocation>
    <subcellularLocation>
        <location evidence="22">Chromosome</location>
        <location evidence="22">Centromere</location>
    </subcellularLocation>
    <subcellularLocation>
        <location evidence="1">Cytoplasm</location>
        <location evidence="1">Cytosol</location>
    </subcellularLocation>
    <text evidence="13 15 16 19 22 24">Associates with replication origins specifically during the G1 phase of the cell cycle (PubMed:18832067, PubMed:20129055). Localizes to transcription start sites (PubMed:21753189, PubMed:24065767). Localizes to ultraviolet-induced DNA damage sites following phosphorylation by ATR (PubMed:28719581). Localizes to centromeres in G1 phase (PubMed:27270040).</text>
</comment>
<comment type="alternative products">
    <event type="alternative splicing"/>
    <isoform>
        <id>O95251-1</id>
        <name>1</name>
        <sequence type="displayed"/>
    </isoform>
    <isoform>
        <id>O95251-2</id>
        <name>2</name>
        <sequence type="described" ref="VSP_042553 VSP_042554"/>
    </isoform>
    <isoform>
        <id>O95251-3</id>
        <name>3</name>
        <sequence type="described" ref="VSP_042552 VSP_042553 VSP_042554"/>
    </isoform>
    <isoform>
        <id>O95251-4</id>
        <name>4</name>
        <sequence type="described" ref="VSP_042554"/>
    </isoform>
    <isoform>
        <id>O95251-5</id>
        <name>5</name>
        <sequence type="described" ref="VSP_042552 VSP_042553"/>
    </isoform>
</comment>
<comment type="tissue specificity">
    <text evidence="6 7">Ubiquitously expressed, with highest levels in testis.</text>
</comment>
<comment type="domain">
    <text evidence="8">The C2HC MYST-type zinc finger is required for interaction with MCM2 and ORC1.</text>
</comment>
<comment type="domain">
    <text evidence="7">The N-terminus is involved in transcriptional repression, while the C-terminus mediates AR-interaction.</text>
</comment>
<comment type="PTM">
    <text evidence="1 12 20 24">Phosphorylated at Ser-50 and Ser-53 by ATR in response to DNA damage, promoting its ubiquitination by the CRL4(DDB2) complex and subsequent degradation (PubMed:26572825). Phosphorylation at Ser-50 and Ser-53 by ATR in response to ultraviolet-induced DNA, promotes localization to DNA damage sites (PubMed:28719581). Phosphorylation at Ser-57 by PLK1 during mitosis seems important for prereplicative complex formation and DNA replication licensing, and requires prior phosphorylation at Thr-85 and Thr-88 by CDK1 (PubMed:18250300). Phosphorylated by MAP2K1, which accelerates its degradation (By similarity).</text>
</comment>
<comment type="PTM">
    <text evidence="18 20">Ubiquitinated at Lys-338, leading to proteasomal degradation (PubMed:23319590). Ubiquitinated by the CRL4(DDB2) complex following phosphorylation by ATR, leading to its subsequent degradation (PubMed:26572825).</text>
</comment>
<comment type="PTM">
    <text evidence="2">Autoacetylation at Lys-432 is required for proper function.</text>
</comment>
<comment type="similarity">
    <text evidence="34">Belongs to the MYST (SAS/MOZ) family.</text>
</comment>
<evidence type="ECO:0000250" key="1">
    <source>
        <dbReference type="UniProtKB" id="Q5SVQ0"/>
    </source>
</evidence>
<evidence type="ECO:0000250" key="2">
    <source>
        <dbReference type="UniProtKB" id="Q9H7Z6"/>
    </source>
</evidence>
<evidence type="ECO:0000255" key="3">
    <source>
        <dbReference type="PROSITE-ProRule" id="PRU01063"/>
    </source>
</evidence>
<evidence type="ECO:0000255" key="4">
    <source>
        <dbReference type="PROSITE-ProRule" id="PRU01143"/>
    </source>
</evidence>
<evidence type="ECO:0000256" key="5">
    <source>
        <dbReference type="SAM" id="MobiDB-lite"/>
    </source>
</evidence>
<evidence type="ECO:0000269" key="6">
    <source>
    </source>
</evidence>
<evidence type="ECO:0000269" key="7">
    <source>
    </source>
</evidence>
<evidence type="ECO:0000269" key="8">
    <source>
    </source>
</evidence>
<evidence type="ECO:0000269" key="9">
    <source>
    </source>
</evidence>
<evidence type="ECO:0000269" key="10">
    <source>
    </source>
</evidence>
<evidence type="ECO:0000269" key="11">
    <source>
    </source>
</evidence>
<evidence type="ECO:0000269" key="12">
    <source>
    </source>
</evidence>
<evidence type="ECO:0000269" key="13">
    <source>
    </source>
</evidence>
<evidence type="ECO:0000269" key="14">
    <source>
    </source>
</evidence>
<evidence type="ECO:0000269" key="15">
    <source>
    </source>
</evidence>
<evidence type="ECO:0000269" key="16">
    <source>
    </source>
</evidence>
<evidence type="ECO:0000269" key="17">
    <source>
    </source>
</evidence>
<evidence type="ECO:0000269" key="18">
    <source>
    </source>
</evidence>
<evidence type="ECO:0000269" key="19">
    <source>
    </source>
</evidence>
<evidence type="ECO:0000269" key="20">
    <source>
    </source>
</evidence>
<evidence type="ECO:0000269" key="21">
    <source>
    </source>
</evidence>
<evidence type="ECO:0000269" key="22">
    <source>
    </source>
</evidence>
<evidence type="ECO:0000269" key="23">
    <source>
    </source>
</evidence>
<evidence type="ECO:0000269" key="24">
    <source>
    </source>
</evidence>
<evidence type="ECO:0000269" key="25">
    <source>
    </source>
</evidence>
<evidence type="ECO:0000269" key="26">
    <source>
    </source>
</evidence>
<evidence type="ECO:0000269" key="27">
    <source>
    </source>
</evidence>
<evidence type="ECO:0000303" key="28">
    <source>
    </source>
</evidence>
<evidence type="ECO:0000303" key="29">
    <source>
    </source>
</evidence>
<evidence type="ECO:0000303" key="30">
    <source>
    </source>
</evidence>
<evidence type="ECO:0000303" key="31">
    <source>
    </source>
</evidence>
<evidence type="ECO:0000303" key="32">
    <source ref="3"/>
</evidence>
<evidence type="ECO:0000303" key="33">
    <source ref="4"/>
</evidence>
<evidence type="ECO:0000305" key="34"/>
<evidence type="ECO:0000305" key="35">
    <source>
    </source>
</evidence>
<evidence type="ECO:0000312" key="36">
    <source>
        <dbReference type="HGNC" id="HGNC:17016"/>
    </source>
</evidence>
<evidence type="ECO:0007744" key="37">
    <source>
        <dbReference type="PDB" id="5GK9"/>
    </source>
</evidence>
<evidence type="ECO:0007744" key="38">
    <source>
        <dbReference type="PDB" id="6MAJ"/>
    </source>
</evidence>
<evidence type="ECO:0007744" key="39">
    <source>
        <dbReference type="PDB" id="6MAK"/>
    </source>
</evidence>
<evidence type="ECO:0007744" key="40">
    <source>
    </source>
</evidence>
<evidence type="ECO:0007744" key="41">
    <source>
    </source>
</evidence>
<evidence type="ECO:0007744" key="42">
    <source>
    </source>
</evidence>
<evidence type="ECO:0007744" key="43">
    <source>
    </source>
</evidence>
<evidence type="ECO:0007744" key="44">
    <source>
    </source>
</evidence>
<evidence type="ECO:0007744" key="45">
    <source>
    </source>
</evidence>
<evidence type="ECO:0007744" key="46">
    <source>
    </source>
</evidence>
<evidence type="ECO:0007744" key="47">
    <source>
    </source>
</evidence>
<evidence type="ECO:0007744" key="48">
    <source>
    </source>
</evidence>
<evidence type="ECO:0007829" key="49">
    <source>
        <dbReference type="PDB" id="6MAJ"/>
    </source>
</evidence>
<evidence type="ECO:0007829" key="50">
    <source>
        <dbReference type="PDB" id="7D0P"/>
    </source>
</evidence>
<reference key="1">
    <citation type="journal article" date="1999" name="J. Biol. Chem.">
        <title>Histone acetyltransferase HBO1 interacts with the ORC1 subunit of the human initiator protein.</title>
        <authorList>
            <person name="Iizuka M."/>
            <person name="Stillman B."/>
        </authorList>
    </citation>
    <scope>NUCLEOTIDE SEQUENCE [MRNA] (ISOFORM 1)</scope>
    <scope>INTERACTION WITH ORC1</scope>
    <scope>FUNCTION</scope>
    <scope>CATALYTIC ACTIVITY</scope>
    <scope>TISSUE SPECIFICITY</scope>
    <source>
        <tissue>Epithelium</tissue>
    </source>
</reference>
<reference key="2">
    <citation type="journal article" date="2000" name="J. Biol. Chem.">
        <title>Androgen receptor interacts with a novel MYST protein, HBO1.</title>
        <authorList>
            <person name="Sharma M."/>
            <person name="Zarnegar M."/>
            <person name="Li X."/>
            <person name="Lim B."/>
            <person name="Sun Z."/>
        </authorList>
    </citation>
    <scope>NUCLEOTIDE SEQUENCE [MRNA] (ISOFORM 1)</scope>
    <scope>TISSUE SPECIFICITY</scope>
    <scope>SUBCELLULAR LOCATION</scope>
    <scope>INTERACTION WITH AR</scope>
    <source>
        <tissue>Prostate</tissue>
    </source>
</reference>
<reference key="3">
    <citation type="submission" date="1999-04" db="EMBL/GenBank/DDBJ databases">
        <title>Cloning and identifying histone acetyltransferase HBOa.</title>
        <authorList>
            <person name="Jian J."/>
            <person name="Guangtao L."/>
            <person name="Guangwei D."/>
            <person name="Yan Z."/>
            <person name="Jianhe C."/>
            <person name="Jiangang Y."/>
            <person name="Boqin Q."/>
        </authorList>
    </citation>
    <scope>NUCLEOTIDE SEQUENCE [MRNA] (ISOFORM 1)</scope>
</reference>
<reference key="4">
    <citation type="submission" date="1999-12" db="EMBL/GenBank/DDBJ databases">
        <title>Structure and function of the human MYST family: MOZ2, MYST1 and MYST2.</title>
        <authorList>
            <person name="Borrow J."/>
            <person name="Housman D.E."/>
        </authorList>
    </citation>
    <scope>NUCLEOTIDE SEQUENCE [MRNA] (ISOFORM 1)</scope>
</reference>
<reference key="5">
    <citation type="journal article" date="2004" name="Nat. Genet.">
        <title>Complete sequencing and characterization of 21,243 full-length human cDNAs.</title>
        <authorList>
            <person name="Ota T."/>
            <person name="Suzuki Y."/>
            <person name="Nishikawa T."/>
            <person name="Otsuki T."/>
            <person name="Sugiyama T."/>
            <person name="Irie R."/>
            <person name="Wakamatsu A."/>
            <person name="Hayashi K."/>
            <person name="Sato H."/>
            <person name="Nagai K."/>
            <person name="Kimura K."/>
            <person name="Makita H."/>
            <person name="Sekine M."/>
            <person name="Obayashi M."/>
            <person name="Nishi T."/>
            <person name="Shibahara T."/>
            <person name="Tanaka T."/>
            <person name="Ishii S."/>
            <person name="Yamamoto J."/>
            <person name="Saito K."/>
            <person name="Kawai Y."/>
            <person name="Isono Y."/>
            <person name="Nakamura Y."/>
            <person name="Nagahari K."/>
            <person name="Murakami K."/>
            <person name="Yasuda T."/>
            <person name="Iwayanagi T."/>
            <person name="Wagatsuma M."/>
            <person name="Shiratori A."/>
            <person name="Sudo H."/>
            <person name="Hosoiri T."/>
            <person name="Kaku Y."/>
            <person name="Kodaira H."/>
            <person name="Kondo H."/>
            <person name="Sugawara M."/>
            <person name="Takahashi M."/>
            <person name="Kanda K."/>
            <person name="Yokoi T."/>
            <person name="Furuya T."/>
            <person name="Kikkawa E."/>
            <person name="Omura Y."/>
            <person name="Abe K."/>
            <person name="Kamihara K."/>
            <person name="Katsuta N."/>
            <person name="Sato K."/>
            <person name="Tanikawa M."/>
            <person name="Yamazaki M."/>
            <person name="Ninomiya K."/>
            <person name="Ishibashi T."/>
            <person name="Yamashita H."/>
            <person name="Murakawa K."/>
            <person name="Fujimori K."/>
            <person name="Tanai H."/>
            <person name="Kimata M."/>
            <person name="Watanabe M."/>
            <person name="Hiraoka S."/>
            <person name="Chiba Y."/>
            <person name="Ishida S."/>
            <person name="Ono Y."/>
            <person name="Takiguchi S."/>
            <person name="Watanabe S."/>
            <person name="Yosida M."/>
            <person name="Hotuta T."/>
            <person name="Kusano J."/>
            <person name="Kanehori K."/>
            <person name="Takahashi-Fujii A."/>
            <person name="Hara H."/>
            <person name="Tanase T.-O."/>
            <person name="Nomura Y."/>
            <person name="Togiya S."/>
            <person name="Komai F."/>
            <person name="Hara R."/>
            <person name="Takeuchi K."/>
            <person name="Arita M."/>
            <person name="Imose N."/>
            <person name="Musashino K."/>
            <person name="Yuuki H."/>
            <person name="Oshima A."/>
            <person name="Sasaki N."/>
            <person name="Aotsuka S."/>
            <person name="Yoshikawa Y."/>
            <person name="Matsunawa H."/>
            <person name="Ichihara T."/>
            <person name="Shiohata N."/>
            <person name="Sano S."/>
            <person name="Moriya S."/>
            <person name="Momiyama H."/>
            <person name="Satoh N."/>
            <person name="Takami S."/>
            <person name="Terashima Y."/>
            <person name="Suzuki O."/>
            <person name="Nakagawa S."/>
            <person name="Senoh A."/>
            <person name="Mizoguchi H."/>
            <person name="Goto Y."/>
            <person name="Shimizu F."/>
            <person name="Wakebe H."/>
            <person name="Hishigaki H."/>
            <person name="Watanabe T."/>
            <person name="Sugiyama A."/>
            <person name="Takemoto M."/>
            <person name="Kawakami B."/>
            <person name="Yamazaki M."/>
            <person name="Watanabe K."/>
            <person name="Kumagai A."/>
            <person name="Itakura S."/>
            <person name="Fukuzumi Y."/>
            <person name="Fujimori Y."/>
            <person name="Komiyama M."/>
            <person name="Tashiro H."/>
            <person name="Tanigami A."/>
            <person name="Fujiwara T."/>
            <person name="Ono T."/>
            <person name="Yamada K."/>
            <person name="Fujii Y."/>
            <person name="Ozaki K."/>
            <person name="Hirao M."/>
            <person name="Ohmori Y."/>
            <person name="Kawabata A."/>
            <person name="Hikiji T."/>
            <person name="Kobatake N."/>
            <person name="Inagaki H."/>
            <person name="Ikema Y."/>
            <person name="Okamoto S."/>
            <person name="Okitani R."/>
            <person name="Kawakami T."/>
            <person name="Noguchi S."/>
            <person name="Itoh T."/>
            <person name="Shigeta K."/>
            <person name="Senba T."/>
            <person name="Matsumura K."/>
            <person name="Nakajima Y."/>
            <person name="Mizuno T."/>
            <person name="Morinaga M."/>
            <person name="Sasaki M."/>
            <person name="Togashi T."/>
            <person name="Oyama M."/>
            <person name="Hata H."/>
            <person name="Watanabe M."/>
            <person name="Komatsu T."/>
            <person name="Mizushima-Sugano J."/>
            <person name="Satoh T."/>
            <person name="Shirai Y."/>
            <person name="Takahashi Y."/>
            <person name="Nakagawa K."/>
            <person name="Okumura K."/>
            <person name="Nagase T."/>
            <person name="Nomura N."/>
            <person name="Kikuchi H."/>
            <person name="Masuho Y."/>
            <person name="Yamashita R."/>
            <person name="Nakai K."/>
            <person name="Yada T."/>
            <person name="Nakamura Y."/>
            <person name="Ohara O."/>
            <person name="Isogai T."/>
            <person name="Sugano S."/>
        </authorList>
    </citation>
    <scope>NUCLEOTIDE SEQUENCE [LARGE SCALE MRNA] (ISOFORMS 1; 2; 3; 4 AND 5)</scope>
    <source>
        <tissue>Brain</tissue>
        <tissue>Cerebellum</tissue>
        <tissue>Thyroid</tissue>
    </source>
</reference>
<reference key="6">
    <citation type="journal article" date="2006" name="Nature">
        <title>DNA sequence of human chromosome 17 and analysis of rearrangement in the human lineage.</title>
        <authorList>
            <person name="Zody M.C."/>
            <person name="Garber M."/>
            <person name="Adams D.J."/>
            <person name="Sharpe T."/>
            <person name="Harrow J."/>
            <person name="Lupski J.R."/>
            <person name="Nicholson C."/>
            <person name="Searle S.M."/>
            <person name="Wilming L."/>
            <person name="Young S.K."/>
            <person name="Abouelleil A."/>
            <person name="Allen N.R."/>
            <person name="Bi W."/>
            <person name="Bloom T."/>
            <person name="Borowsky M.L."/>
            <person name="Bugalter B.E."/>
            <person name="Butler J."/>
            <person name="Chang J.L."/>
            <person name="Chen C.-K."/>
            <person name="Cook A."/>
            <person name="Corum B."/>
            <person name="Cuomo C.A."/>
            <person name="de Jong P.J."/>
            <person name="DeCaprio D."/>
            <person name="Dewar K."/>
            <person name="FitzGerald M."/>
            <person name="Gilbert J."/>
            <person name="Gibson R."/>
            <person name="Gnerre S."/>
            <person name="Goldstein S."/>
            <person name="Grafham D.V."/>
            <person name="Grocock R."/>
            <person name="Hafez N."/>
            <person name="Hagopian D.S."/>
            <person name="Hart E."/>
            <person name="Norman C.H."/>
            <person name="Humphray S."/>
            <person name="Jaffe D.B."/>
            <person name="Jones M."/>
            <person name="Kamal M."/>
            <person name="Khodiyar V.K."/>
            <person name="LaButti K."/>
            <person name="Laird G."/>
            <person name="Lehoczky J."/>
            <person name="Liu X."/>
            <person name="Lokyitsang T."/>
            <person name="Loveland J."/>
            <person name="Lui A."/>
            <person name="Macdonald P."/>
            <person name="Major J.E."/>
            <person name="Matthews L."/>
            <person name="Mauceli E."/>
            <person name="McCarroll S.A."/>
            <person name="Mihalev A.H."/>
            <person name="Mudge J."/>
            <person name="Nguyen C."/>
            <person name="Nicol R."/>
            <person name="O'Leary S.B."/>
            <person name="Osoegawa K."/>
            <person name="Schwartz D.C."/>
            <person name="Shaw-Smith C."/>
            <person name="Stankiewicz P."/>
            <person name="Steward C."/>
            <person name="Swarbreck D."/>
            <person name="Venkataraman V."/>
            <person name="Whittaker C.A."/>
            <person name="Yang X."/>
            <person name="Zimmer A.R."/>
            <person name="Bradley A."/>
            <person name="Hubbard T."/>
            <person name="Birren B.W."/>
            <person name="Rogers J."/>
            <person name="Lander E.S."/>
            <person name="Nusbaum C."/>
        </authorList>
    </citation>
    <scope>NUCLEOTIDE SEQUENCE [LARGE SCALE GENOMIC DNA]</scope>
</reference>
<reference key="7">
    <citation type="submission" date="2005-09" db="EMBL/GenBank/DDBJ databases">
        <authorList>
            <person name="Mural R.J."/>
            <person name="Istrail S."/>
            <person name="Sutton G.G."/>
            <person name="Florea L."/>
            <person name="Halpern A.L."/>
            <person name="Mobarry C.M."/>
            <person name="Lippert R."/>
            <person name="Walenz B."/>
            <person name="Shatkay H."/>
            <person name="Dew I."/>
            <person name="Miller J.R."/>
            <person name="Flanigan M.J."/>
            <person name="Edwards N.J."/>
            <person name="Bolanos R."/>
            <person name="Fasulo D."/>
            <person name="Halldorsson B.V."/>
            <person name="Hannenhalli S."/>
            <person name="Turner R."/>
            <person name="Yooseph S."/>
            <person name="Lu F."/>
            <person name="Nusskern D.R."/>
            <person name="Shue B.C."/>
            <person name="Zheng X.H."/>
            <person name="Zhong F."/>
            <person name="Delcher A.L."/>
            <person name="Huson D.H."/>
            <person name="Kravitz S.A."/>
            <person name="Mouchard L."/>
            <person name="Reinert K."/>
            <person name="Remington K.A."/>
            <person name="Clark A.G."/>
            <person name="Waterman M.S."/>
            <person name="Eichler E.E."/>
            <person name="Adams M.D."/>
            <person name="Hunkapiller M.W."/>
            <person name="Myers E.W."/>
            <person name="Venter J.C."/>
        </authorList>
    </citation>
    <scope>NUCLEOTIDE SEQUENCE [LARGE SCALE GENOMIC DNA]</scope>
</reference>
<reference key="8">
    <citation type="journal article" date="2004" name="Genome Res.">
        <title>The status, quality, and expansion of the NIH full-length cDNA project: the Mammalian Gene Collection (MGC).</title>
        <authorList>
            <consortium name="The MGC Project Team"/>
        </authorList>
    </citation>
    <scope>NUCLEOTIDE SEQUENCE [LARGE SCALE MRNA] (ISOFORM 1)</scope>
    <source>
        <tissue>Lymph</tissue>
    </source>
</reference>
<reference key="9">
    <citation type="journal article" date="2001" name="J. Biol. Chem.">
        <title>Replication factors MCM2 and ORC1 interact with the histone acetyltransferase HBO1.</title>
        <authorList>
            <person name="Burke T.W."/>
            <person name="Cook J.G."/>
            <person name="Asano M."/>
            <person name="Nevins J.R."/>
        </authorList>
    </citation>
    <scope>INTERACTION WITH MCM2 AND ORC1</scope>
    <scope>DOMAIN</scope>
    <scope>SUBCELLULAR LOCATION</scope>
    <scope>FUNCTION</scope>
    <scope>MUTAGENESIS OF CYS-371</scope>
</reference>
<reference key="10">
    <citation type="journal article" date="2006" name="Biochem. Biophys. Res. Commun.">
        <title>Histone acetyltransferase HBO1 inhibits NF-kappaB activity by coactivator sequestration.</title>
        <authorList>
            <person name="Contzler R."/>
            <person name="Regamey A."/>
            <person name="Favre B."/>
            <person name="Roger T."/>
            <person name="Hohl D."/>
            <person name="Huber M."/>
        </authorList>
    </citation>
    <scope>FUNCTION</scope>
</reference>
<reference key="11">
    <citation type="journal article" date="2006" name="Cell">
        <title>Global, in vivo, and site-specific phosphorylation dynamics in signaling networks.</title>
        <authorList>
            <person name="Olsen J.V."/>
            <person name="Blagoev B."/>
            <person name="Gnad F."/>
            <person name="Macek B."/>
            <person name="Kumar C."/>
            <person name="Mortensen P."/>
            <person name="Mann M."/>
        </authorList>
    </citation>
    <scope>IDENTIFICATION BY MASS SPECTROMETRY [LARGE SCALE ANALYSIS]</scope>
    <source>
        <tissue>Cervix carcinoma</tissue>
    </source>
</reference>
<reference key="12">
    <citation type="journal article" date="2006" name="Mol. Cell">
        <title>ING tumor suppressor proteins are critical regulators of chromatin acetylation required for genome expression and perpetuation.</title>
        <authorList>
            <person name="Doyon Y."/>
            <person name="Cayrou C."/>
            <person name="Ullah M."/>
            <person name="Landry A.-J."/>
            <person name="Cote V."/>
            <person name="Selleck W."/>
            <person name="Lane W.S."/>
            <person name="Tan S."/>
            <person name="Yang X.-J."/>
            <person name="Cote J."/>
        </authorList>
    </citation>
    <scope>FUNCTION IN HISTONE ACETYLATION</scope>
    <scope>IDENTIFICATION IN THE HBO1 COMPLEX</scope>
    <scope>INTERACTION WITH MCM2</scope>
    <scope>SUBCELLULAR LOCATION</scope>
</reference>
<reference key="13">
    <citation type="journal article" date="2006" name="Nat. Biotechnol.">
        <title>A probability-based approach for high-throughput protein phosphorylation analysis and site localization.</title>
        <authorList>
            <person name="Beausoleil S.A."/>
            <person name="Villen J."/>
            <person name="Gerber S.A."/>
            <person name="Rush J."/>
            <person name="Gygi S.P."/>
        </authorList>
    </citation>
    <scope>PHOSPHORYLATION [LARGE SCALE ANALYSIS] AT THR-88</scope>
    <scope>IDENTIFICATION BY MASS SPECTROMETRY [LARGE SCALE ANALYSIS]</scope>
    <source>
        <tissue>Cervix carcinoma</tissue>
    </source>
</reference>
<reference key="14">
    <citation type="journal article" date="2007" name="Science">
        <title>ATM and ATR substrate analysis reveals extensive protein networks responsive to DNA damage.</title>
        <authorList>
            <person name="Matsuoka S."/>
            <person name="Ballif B.A."/>
            <person name="Smogorzewska A."/>
            <person name="McDonald E.R. III"/>
            <person name="Hurov K.E."/>
            <person name="Luo J."/>
            <person name="Bakalarski C.E."/>
            <person name="Zhao Z."/>
            <person name="Solimini N."/>
            <person name="Lerenthal Y."/>
            <person name="Shiloh Y."/>
            <person name="Gygi S.P."/>
            <person name="Elledge S.J."/>
        </authorList>
    </citation>
    <scope>IDENTIFICATION BY MASS SPECTROMETRY [LARGE SCALE ANALYSIS]</scope>
    <source>
        <tissue>Embryonic kidney</tissue>
    </source>
</reference>
<reference key="15">
    <citation type="journal article" date="2008" name="Genes Dev.">
        <title>HBO1 histone acetylase is a coactivator of the replication licensing factor Cdt1.</title>
        <authorList>
            <person name="Miotto B."/>
            <person name="Struhl K."/>
        </authorList>
    </citation>
    <scope>INTERACTION WITH CDT1</scope>
    <scope>SUBCELLULAR LOCATION</scope>
</reference>
<reference key="16">
    <citation type="journal article" date="2008" name="Mol. Cell. Biol.">
        <title>Hbo1 Links p53-dependent stress signaling to DNA replication licensing.</title>
        <authorList>
            <person name="Iizuka M."/>
            <person name="Sarmento O.F."/>
            <person name="Sekiya T."/>
            <person name="Scrable H."/>
            <person name="Allis C.D."/>
            <person name="Smith M.M."/>
        </authorList>
    </citation>
    <scope>CATALYTIC ACTIVITY</scope>
    <scope>INTERACTION WITH TP53</scope>
    <scope>MUTAGENESIS OF GLY-485</scope>
</reference>
<reference key="17">
    <citation type="journal article" date="2008" name="Proc. Natl. Acad. Sci. U.S.A.">
        <title>A quantitative atlas of mitotic phosphorylation.</title>
        <authorList>
            <person name="Dephoure N."/>
            <person name="Zhou C."/>
            <person name="Villen J."/>
            <person name="Beausoleil S.A."/>
            <person name="Bakalarski C.E."/>
            <person name="Elledge S.J."/>
            <person name="Gygi S.P."/>
        </authorList>
    </citation>
    <scope>PHOSPHORYLATION [LARGE SCALE ANALYSIS] AT SER-50; SER-57; THR-85; THR-88 AND SER-102</scope>
    <scope>IDENTIFICATION BY MASS SPECTROMETRY [LARGE SCALE ANALYSIS]</scope>
    <source>
        <tissue>Cervix carcinoma</tissue>
    </source>
</reference>
<reference key="18">
    <citation type="journal article" date="2008" name="Proc. Natl. Acad. Sci. U.S.A.">
        <title>Role for Plk1 phosphorylation of Hbo1 in regulation of replication licensing.</title>
        <authorList>
            <person name="Wu Z.Q."/>
            <person name="Liu X."/>
        </authorList>
    </citation>
    <scope>PHOSPHORYLATION AT SER-57 BY PLK1</scope>
    <scope>PHOSPHORYLATION AT THR-85 AND THR-88 BY CDK1</scope>
    <scope>MUTAGENESIS OF SER-57</scope>
</reference>
<reference key="19">
    <citation type="journal article" date="2009" name="Anal. Chem.">
        <title>Lys-N and trypsin cover complementary parts of the phosphoproteome in a refined SCX-based approach.</title>
        <authorList>
            <person name="Gauci S."/>
            <person name="Helbig A.O."/>
            <person name="Slijper M."/>
            <person name="Krijgsveld J."/>
            <person name="Heck A.J."/>
            <person name="Mohammed S."/>
        </authorList>
    </citation>
    <scope>IDENTIFICATION BY MASS SPECTROMETRY [LARGE SCALE ANALYSIS]</scope>
</reference>
<reference key="20">
    <citation type="journal article" date="2009" name="Mol. Cell">
        <title>HBO1 HAT complexes target chromatin throughout gene coding regions via multiple PHD finger interactions with histone H3 tail.</title>
        <authorList>
            <person name="Saksouk N."/>
            <person name="Avvakumov N."/>
            <person name="Champagne K.S."/>
            <person name="Hung T."/>
            <person name="Doyon Y."/>
            <person name="Cayrou C."/>
            <person name="Paquet E."/>
            <person name="Ullah M."/>
            <person name="Landry A.J."/>
            <person name="Cote V."/>
            <person name="Yang X.J."/>
            <person name="Gozani O."/>
            <person name="Kutateladze T.G."/>
            <person name="Cote J."/>
        </authorList>
    </citation>
    <scope>FUNCTION</scope>
    <scope>IDENTIFICATION IN THE HBO1 COMPLEX</scope>
    <scope>SUBCELLULAR LOCATION</scope>
</reference>
<reference key="21">
    <citation type="journal article" date="2009" name="Sci. Signal.">
        <title>Quantitative phosphoproteomic analysis of T cell receptor signaling reveals system-wide modulation of protein-protein interactions.</title>
        <authorList>
            <person name="Mayya V."/>
            <person name="Lundgren D.H."/>
            <person name="Hwang S.-I."/>
            <person name="Rezaul K."/>
            <person name="Wu L."/>
            <person name="Eng J.K."/>
            <person name="Rodionov V."/>
            <person name="Han D.K."/>
        </authorList>
    </citation>
    <scope>PHOSPHORYLATION [LARGE SCALE ANALYSIS] AT SER-57; THR-85; THR-88 AND SER-102</scope>
    <scope>IDENTIFICATION BY MASS SPECTROMETRY [LARGE SCALE ANALYSIS]</scope>
    <source>
        <tissue>Leukemic T-cell</tissue>
    </source>
</reference>
<reference key="22">
    <citation type="journal article" date="2009" name="Science">
        <title>Lysine acetylation targets protein complexes and co-regulates major cellular functions.</title>
        <authorList>
            <person name="Choudhary C."/>
            <person name="Kumar C."/>
            <person name="Gnad F."/>
            <person name="Nielsen M.L."/>
            <person name="Rehman M."/>
            <person name="Walther T.C."/>
            <person name="Olsen J.V."/>
            <person name="Mann M."/>
        </authorList>
    </citation>
    <scope>ACETYLATION [LARGE SCALE ANALYSIS] AT LYS-199</scope>
    <scope>IDENTIFICATION BY MASS SPECTROMETRY [LARGE SCALE ANALYSIS]</scope>
</reference>
<reference key="23">
    <citation type="journal article" date="2010" name="Mol. Cell">
        <title>HBO1 histone acetylase activity is essential for DNA replication licensing and inhibited by Geminin.</title>
        <authorList>
            <person name="Miotto B."/>
            <person name="Struhl K."/>
        </authorList>
    </citation>
    <scope>FUNCTION</scope>
    <scope>ACTIVITY REGULATION</scope>
    <scope>IDENTIFICATION IN THE HBO1 COMPLEX</scope>
    <scope>SUBCELLULAR LOCATION</scope>
    <scope>MUTAGENESIS OF GLY-485</scope>
</reference>
<reference key="24">
    <citation type="journal article" date="2010" name="Sci. Signal.">
        <title>Quantitative phosphoproteomics reveals widespread full phosphorylation site occupancy during mitosis.</title>
        <authorList>
            <person name="Olsen J.V."/>
            <person name="Vermeulen M."/>
            <person name="Santamaria A."/>
            <person name="Kumar C."/>
            <person name="Miller M.L."/>
            <person name="Jensen L.J."/>
            <person name="Gnad F."/>
            <person name="Cox J."/>
            <person name="Jensen T.S."/>
            <person name="Nigg E.A."/>
            <person name="Brunak S."/>
            <person name="Mann M."/>
        </authorList>
    </citation>
    <scope>PHOSPHORYLATION [LARGE SCALE ANALYSIS] AT SER-162 AND SER-506</scope>
    <scope>IDENTIFICATION BY MASS SPECTROMETRY [LARGE SCALE ANALYSIS]</scope>
    <source>
        <tissue>Cervix carcinoma</tissue>
    </source>
</reference>
<reference key="25">
    <citation type="journal article" date="2011" name="Blood">
        <title>The Hbo1-Brd1/Brpf2 complex is responsible for global acetylation of H3K14 and required for fetal liver erythropoiesis.</title>
        <authorList>
            <person name="Mishima Y."/>
            <person name="Miyagi S."/>
            <person name="Saraya A."/>
            <person name="Negishi M."/>
            <person name="Endoh M."/>
            <person name="Endo T.A."/>
            <person name="Toyoda T."/>
            <person name="Shinga J."/>
            <person name="Katsumoto T."/>
            <person name="Chiba T."/>
            <person name="Yamaguchi N."/>
            <person name="Kitabayashi I."/>
            <person name="Koseki H."/>
            <person name="Iwama A."/>
        </authorList>
    </citation>
    <scope>FUNCTION</scope>
    <scope>SUBCELLULAR LOCATION</scope>
    <scope>IDENTIFICATION IN THE HBO1 COMPLEX</scope>
</reference>
<reference key="26">
    <citation type="journal article" date="2011" name="Mol. Cell">
        <title>JNK1 phosphorylation of Cdt1 inhibits recruitment of HBO1 histone acetylase and blocks replication licensing in response to stress.</title>
        <authorList>
            <person name="Miotto B."/>
            <person name="Struhl K."/>
        </authorList>
    </citation>
    <scope>FUNCTION</scope>
</reference>
<reference key="27">
    <citation type="journal article" date="2011" name="Sci. Signal.">
        <title>System-wide temporal characterization of the proteome and phosphoproteome of human embryonic stem cell differentiation.</title>
        <authorList>
            <person name="Rigbolt K.T."/>
            <person name="Prokhorova T.A."/>
            <person name="Akimov V."/>
            <person name="Henningsen J."/>
            <person name="Johansen P.T."/>
            <person name="Kratchmarova I."/>
            <person name="Kassem M."/>
            <person name="Mann M."/>
            <person name="Olsen J.V."/>
            <person name="Blagoev B."/>
        </authorList>
    </citation>
    <scope>PHOSPHORYLATION [LARGE SCALE ANALYSIS] AT SER-57; THR-88; SER-102; SER-124; SER-162 AND SER-164</scope>
    <scope>IDENTIFICATION BY MASS SPECTROMETRY [LARGE SCALE ANALYSIS]</scope>
</reference>
<reference key="28">
    <citation type="journal article" date="2013" name="Genes Dev.">
        <title>Exchange of associated factors directs a switch in HBO1 acetyltransferase histone tail specificity.</title>
        <authorList>
            <person name="Lalonde M.E."/>
            <person name="Avvakumov N."/>
            <person name="Glass K.C."/>
            <person name="Joncas F.H."/>
            <person name="Saksouk N."/>
            <person name="Holliday M."/>
            <person name="Paquet E."/>
            <person name="Yan K."/>
            <person name="Tong Q."/>
            <person name="Klein B.J."/>
            <person name="Tan S."/>
            <person name="Yang X.J."/>
            <person name="Kutateladze T.G."/>
            <person name="Cote J."/>
        </authorList>
    </citation>
    <scope>FUNCTION</scope>
    <scope>CATALYTIC ACTIVITY</scope>
    <scope>IDENTIFICATION IN THE HBO1 COMPLEX</scope>
    <scope>SUBCELLULAR LOCATION</scope>
</reference>
<reference key="29">
    <citation type="journal article" date="2013" name="J. Biol. Chem.">
        <title>SCF(Fbxw15) mediates histone acetyltransferase binding to origin recognition complex (HBO1) ubiquitin-proteasomal degradation to regulate cell proliferation.</title>
        <authorList>
            <person name="Zou C."/>
            <person name="Chen Y."/>
            <person name="Smith R.M."/>
            <person name="Snavely C."/>
            <person name="Li J."/>
            <person name="Coon T.A."/>
            <person name="Chen B.B."/>
            <person name="Zhao Y."/>
            <person name="Mallampalli R.K."/>
        </authorList>
    </citation>
    <scope>MUTAGENESIS OF LYS-338</scope>
    <scope>UBIQUITINATION AT LYS-338</scope>
</reference>
<reference key="30">
    <citation type="journal article" date="2013" name="J. Proteome Res.">
        <title>Toward a comprehensive characterization of a human cancer cell phosphoproteome.</title>
        <authorList>
            <person name="Zhou H."/>
            <person name="Di Palma S."/>
            <person name="Preisinger C."/>
            <person name="Peng M."/>
            <person name="Polat A.N."/>
            <person name="Heck A.J."/>
            <person name="Mohammed S."/>
        </authorList>
    </citation>
    <scope>PHOSPHORYLATION [LARGE SCALE ANALYSIS] AT SER-10; SER-50; SER-57; SER-64; SER-102; SER-111; SER-162; SER-164; SER-178 AND SER-506</scope>
    <scope>IDENTIFICATION BY MASS SPECTROMETRY [LARGE SCALE ANALYSIS]</scope>
    <source>
        <tissue>Cervix carcinoma</tissue>
        <tissue>Erythroleukemia</tissue>
    </source>
</reference>
<reference key="31">
    <citation type="journal article" date="2014" name="J. Proteomics">
        <title>An enzyme assisted RP-RPLC approach for in-depth analysis of human liver phosphoproteome.</title>
        <authorList>
            <person name="Bian Y."/>
            <person name="Song C."/>
            <person name="Cheng K."/>
            <person name="Dong M."/>
            <person name="Wang F."/>
            <person name="Huang J."/>
            <person name="Sun D."/>
            <person name="Wang L."/>
            <person name="Ye M."/>
            <person name="Zou H."/>
        </authorList>
    </citation>
    <scope>PHOSPHORYLATION [LARGE SCALE ANALYSIS] AT SER-158</scope>
    <scope>IDENTIFICATION BY MASS SPECTROMETRY [LARGE SCALE ANALYSIS]</scope>
    <source>
        <tissue>Liver</tissue>
    </source>
</reference>
<reference key="32">
    <citation type="journal article" date="2016" name="Dev. Cell">
        <title>KAT7/HBO1/MYST2 regulates CENP-A chromatin assembly by antagonizing Suv39h1-mediated centromere inactivation.</title>
        <authorList>
            <person name="Ohzeki J."/>
            <person name="Shono N."/>
            <person name="Otake K."/>
            <person name="Martins N.M."/>
            <person name="Kugou K."/>
            <person name="Kimura H."/>
            <person name="Nagase T."/>
            <person name="Larionov V."/>
            <person name="Earnshaw W.C."/>
            <person name="Masumoto H."/>
        </authorList>
    </citation>
    <scope>FUNCTION</scope>
    <scope>SUBCELLULAR LOCATION</scope>
    <scope>INTERACTION WITH MIS18BP1</scope>
</reference>
<reference key="33">
    <citation type="journal article" date="2016" name="EMBO J.">
        <title>BRPF3-HBO1 regulates replication origin activation and histone H3K14 acetylation.</title>
        <authorList>
            <person name="Feng Y."/>
            <person name="Vlassis A."/>
            <person name="Roques C."/>
            <person name="Lalonde M.E."/>
            <person name="Gonzalez-Aguilera C."/>
            <person name="Lambert J.P."/>
            <person name="Lee S.B."/>
            <person name="Zhao X."/>
            <person name="Alabert C."/>
            <person name="Johansen J.V."/>
            <person name="Paquet E."/>
            <person name="Yang X.J."/>
            <person name="Gingras A.C."/>
            <person name="Cote J."/>
            <person name="Groth A."/>
        </authorList>
    </citation>
    <scope>FUNCTION</scope>
    <scope>CATALYTIC ACTIVITY</scope>
    <scope>IDENTIFICATION IN THE HBO1 COMPLEX</scope>
</reference>
<reference key="34">
    <citation type="journal article" date="2016" name="Mol. Cell. Biol.">
        <title>UV damage-induced phosphorylation of HBO1 triggers CRL4DDB2-mediated degradation to regulate cell proliferation.</title>
        <authorList>
            <person name="Matsunuma R."/>
            <person name="Niida H."/>
            <person name="Ohhata T."/>
            <person name="Kitagawa K."/>
            <person name="Sakai S."/>
            <person name="Uchida C."/>
            <person name="Shiotani B."/>
            <person name="Matsumoto M."/>
            <person name="Nakayama K.I."/>
            <person name="Ogura H."/>
            <person name="Shiiya N."/>
            <person name="Kitagawa M."/>
        </authorList>
    </citation>
    <scope>PHOSPHORYLATION AT SER-50 AND SER-53</scope>
    <scope>UBIQUITINATION</scope>
    <scope>MUTAGENESIS OF 50-SER--SER-53</scope>
</reference>
<reference key="35">
    <citation type="journal article" date="2017" name="Nat. Commun.">
        <title>Phosphorylated HBO1 at UV irradiated sites is essential for nucleotide excision repair.</title>
        <authorList>
            <person name="Niida H."/>
            <person name="Matsunuma R."/>
            <person name="Horiguchi R."/>
            <person name="Uchida C."/>
            <person name="Nakazawa Y."/>
            <person name="Motegi A."/>
            <person name="Nishimoto K."/>
            <person name="Sakai S."/>
            <person name="Ohhata T."/>
            <person name="Kitagawa K."/>
            <person name="Moriwaki S."/>
            <person name="Nishitani H."/>
            <person name="Ui A."/>
            <person name="Ogi T."/>
            <person name="Kitagawa M."/>
        </authorList>
    </citation>
    <scope>FUNCTION</scope>
    <scope>PHOSPHORYLATION AT SER-50 AND SER-53</scope>
    <scope>SUBCELLULAR LOCATION</scope>
</reference>
<reference key="36">
    <citation type="journal article" date="2017" name="Nat. Struct. Mol. Biol.">
        <title>Site-specific mapping of the human SUMO proteome reveals co-modification with phosphorylation.</title>
        <authorList>
            <person name="Hendriks I.A."/>
            <person name="Lyon D."/>
            <person name="Young C."/>
            <person name="Jensen L.J."/>
            <person name="Vertegaal A.C."/>
            <person name="Nielsen M.L."/>
        </authorList>
    </citation>
    <scope>SUMOYLATION [LARGE SCALE ANALYSIS] AT LYS-323</scope>
    <scope>IDENTIFICATION BY MASS SPECTROMETRY [LARGE SCALE ANALYSIS]</scope>
</reference>
<reference key="37">
    <citation type="journal article" date="2018" name="J. Biol. Chem.">
        <title>The scaffolding protein JADE1 physically links the acetyltransferase subunit HBO1 with its histone H3-H4 substrate.</title>
        <authorList>
            <person name="Han J."/>
            <person name="Lachance C."/>
            <person name="Ricketts M.D."/>
            <person name="McCullough C.E."/>
            <person name="Gerace M."/>
            <person name="Black B.E."/>
            <person name="Cote J."/>
            <person name="Marmorstein R."/>
        </authorList>
    </citation>
    <scope>INTERACTION WITH JADE1</scope>
</reference>
<reference key="38">
    <citation type="journal article" date="2019" name="Mol. Cell. Biol.">
        <title>HBO1(KAT7) does not have an essential role in cell proliferation, DNA replication or histone 4 acetylation in human cells.</title>
        <authorList>
            <person name="Kueh A.J."/>
            <person name="Eccles S."/>
            <person name="Tang L."/>
            <person name="Garnham A.L."/>
            <person name="May R.E."/>
            <person name="Herold M.J."/>
            <person name="Smyth G.K."/>
            <person name="Voss A.K."/>
            <person name="Thomas T."/>
        </authorList>
    </citation>
    <scope>FUNCTION</scope>
</reference>
<reference evidence="37" key="39">
    <citation type="journal article" date="2017" name="Nucleic Acids Res.">
        <title>Structural and mechanistic insights into regulation of HBO1 histone acetyltransferase activity by BRPF2.</title>
        <authorList>
            <person name="Tao Y."/>
            <person name="Zhong C."/>
            <person name="Zhu J."/>
            <person name="Xu S."/>
            <person name="Ding J."/>
        </authorList>
    </citation>
    <scope>X-RAY CRYSTALLOGRAPHY (2.40 ANGSTROMS) OF 336-611 IN COMPLEX WITH BRD1; ZINC AND ACETYL-COA</scope>
</reference>
<reference evidence="38 39" key="40">
    <citation type="journal article" date="2020" name="Nature">
        <title>HBO1 is required for the maintenance of leukaemia stem cells.</title>
        <authorList>
            <person name="MacPherson L."/>
            <person name="Anokye J."/>
            <person name="Yeung M.M."/>
            <person name="Lam E.Y.N."/>
            <person name="Chan Y.C."/>
            <person name="Weng C.F."/>
            <person name="Yeh P."/>
            <person name="Knezevic K."/>
            <person name="Butler M.S."/>
            <person name="Hoegl A."/>
            <person name="Chan K.L."/>
            <person name="Burr M.L."/>
            <person name="Gearing L.J."/>
            <person name="Willson T."/>
            <person name="Liu J."/>
            <person name="Choi J."/>
            <person name="Yang Y."/>
            <person name="Bilardi R.A."/>
            <person name="Falk H."/>
            <person name="Nguyen N."/>
            <person name="Stupple P.A."/>
            <person name="Peat T.S."/>
            <person name="Zhang M."/>
            <person name="de Silva M."/>
            <person name="Carrasco-Pozo C."/>
            <person name="Avery V.M."/>
            <person name="Khoo P.S."/>
            <person name="Dolezal O."/>
            <person name="Dennis M.L."/>
            <person name="Nuttall S."/>
            <person name="Surjadi R."/>
            <person name="Newman J."/>
            <person name="Ren B."/>
            <person name="Leaver D.J."/>
            <person name="Sun Y."/>
            <person name="Baell J.B."/>
            <person name="Dovey O."/>
            <person name="Vassiliou G.S."/>
            <person name="Grebien F."/>
            <person name="Dawson S.J."/>
            <person name="Street I.P."/>
            <person name="Monahan B.J."/>
            <person name="Burns C.J."/>
            <person name="Choudhary C."/>
            <person name="Blewitt M.E."/>
            <person name="Voss A.K."/>
            <person name="Thomas T."/>
            <person name="Dawson M.A."/>
        </authorList>
    </citation>
    <scope>X-RAY CRYSTALLOGRAPHY (2.13 ANGSTROMS) OF 336-609 IN COMPLEX WITH BRD1; ZINC; WM-3835 INHIBITOR AND ACETYL-COA</scope>
    <scope>FUNCTION</scope>
    <scope>CATALYTIC ACTIVITY</scope>
    <scope>ACTIVITY REGULATION</scope>
    <scope>MUTAGENESIS OF GLU-508</scope>
</reference>
<name>KAT7_HUMAN</name>
<keyword id="KW-0002">3D-structure</keyword>
<keyword id="KW-0007">Acetylation</keyword>
<keyword id="KW-0012">Acyltransferase</keyword>
<keyword id="KW-0025">Alternative splicing</keyword>
<keyword id="KW-0137">Centromere</keyword>
<keyword id="KW-0156">Chromatin regulator</keyword>
<keyword id="KW-0158">Chromosome</keyword>
<keyword id="KW-0963">Cytoplasm</keyword>
<keyword id="KW-0227">DNA damage</keyword>
<keyword id="KW-0234">DNA repair</keyword>
<keyword id="KW-0235">DNA replication</keyword>
<keyword id="KW-1017">Isopeptide bond</keyword>
<keyword id="KW-0479">Metal-binding</keyword>
<keyword id="KW-0539">Nucleus</keyword>
<keyword id="KW-0597">Phosphoprotein</keyword>
<keyword id="KW-1267">Proteomics identification</keyword>
<keyword id="KW-1185">Reference proteome</keyword>
<keyword id="KW-0804">Transcription</keyword>
<keyword id="KW-0805">Transcription regulation</keyword>
<keyword id="KW-0808">Transferase</keyword>
<keyword id="KW-0832">Ubl conjugation</keyword>
<keyword id="KW-0862">Zinc</keyword>
<keyword id="KW-0863">Zinc-finger</keyword>